<organism>
    <name type="scientific">Homo sapiens</name>
    <name type="common">Human</name>
    <dbReference type="NCBI Taxonomy" id="9606"/>
    <lineage>
        <taxon>Eukaryota</taxon>
        <taxon>Metazoa</taxon>
        <taxon>Chordata</taxon>
        <taxon>Craniata</taxon>
        <taxon>Vertebrata</taxon>
        <taxon>Euteleostomi</taxon>
        <taxon>Mammalia</taxon>
        <taxon>Eutheria</taxon>
        <taxon>Euarchontoglires</taxon>
        <taxon>Primates</taxon>
        <taxon>Haplorrhini</taxon>
        <taxon>Catarrhini</taxon>
        <taxon>Hominidae</taxon>
        <taxon>Homo</taxon>
    </lineage>
</organism>
<sequence>MAISGVPVLGFFIIAVLMSAQESWAIKEEHVIIQAEFYLNPDQSGEFMFDFDGDEIFHVDMAKKETVWRLEEFGRFASFEAQGALANIAVDKANLEIMTKRSNYTPITNVPPEVTVLTNSPVELREPNVLICFIDKFTPPVVNVTWLRNGKPVTTGVSETVFLPREDHLFRKFHYLPFLPSTEDVYDCRVEHWGLDEPLLKHWEFDAPSPLPETTENVVCALGLTVGLVGIIIGTIFIIKGLRKSNAAERRGPL</sequence>
<keyword id="KW-0002">3D-structure</keyword>
<keyword id="KW-1064">Adaptive immunity</keyword>
<keyword id="KW-1003">Cell membrane</keyword>
<keyword id="KW-0968">Cytoplasmic vesicle</keyword>
<keyword id="KW-0903">Direct protein sequencing</keyword>
<keyword id="KW-1015">Disulfide bond</keyword>
<keyword id="KW-0256">Endoplasmic reticulum</keyword>
<keyword id="KW-0967">Endosome</keyword>
<keyword id="KW-0325">Glycoprotein</keyword>
<keyword id="KW-0945">Host-virus interaction</keyword>
<keyword id="KW-0391">Immunity</keyword>
<keyword id="KW-1017">Isopeptide bond</keyword>
<keyword id="KW-0458">Lysosome</keyword>
<keyword id="KW-0472">Membrane</keyword>
<keyword id="KW-0491">MHC II</keyword>
<keyword id="KW-1267">Proteomics identification</keyword>
<keyword id="KW-1185">Reference proteome</keyword>
<keyword id="KW-0732">Signal</keyword>
<keyword id="KW-0812">Transmembrane</keyword>
<keyword id="KW-1133">Transmembrane helix</keyword>
<keyword id="KW-0832">Ubl conjugation</keyword>
<comment type="function">
    <text evidence="9 10 12 13 22 24 25 26 29 30 31 39 41">An alpha chain of antigen-presenting major histocompatibility complex class II (MHCII) molecule. In complex with the beta chain HLA-DRB, displays antigenic peptides on professional antigen presenting cells (APCs) for recognition by alpha-beta T cell receptor (TCR) on HLA-DR-restricted CD4-positive T cells. This guides antigen-specific T-helper effector functions, both antibody-mediated immune response and macrophage activation, to ultimately eliminate the infectious agents and transformed cells (PubMed:15265931, PubMed:15322540, PubMed:17334368, PubMed:22327072, PubMed:24190431, PubMed:27591323, PubMed:29884618, PubMed:31495665, PubMed:8145819, PubMed:9075930). Typically presents extracellular peptide antigens of 10 to 30 amino acids that arise from proteolysis of endocytosed antigens in lysosomes (PubMed:8145819). In the tumor microenvironment, presents antigenic peptides that are primarily generated in tumor-resident APCs likely via phagocytosis of apoptotic tumor cells or macropinocytosis of secreted tumor proteins (PubMed:31495665). Presents peptides derived from intracellular proteins that are trapped in autolysosomes after macroautophagy, a mechanism especially relevant for T cell selection in the thymus and central immune tolerance (PubMed:17182262, PubMed:23783831). The selection of the immunodominant epitopes follows two processing modes: 'bind first, cut/trim later' for pathogen-derived antigenic peptides and 'cut first, bind later' for autoantigens/self-peptides (PubMed:25413013). The anchor residue at position 1 of the peptide N-terminus, usually a large hydrophobic residue, is essential for high affinity interaction with MHCII molecules (PubMed:8145819).</text>
</comment>
<comment type="subunit">
    <text evidence="3 4 5 8 11 13 14 16 20 23 26 28 30 32 33 37 38 41 42 43">Heterotrimer that consists of an alpha chain HLA-DRA, a beta chain HLA-DRB and a peptide (peptide-MHCII) (PubMed:11080454, PubMed:11163233, PubMed:12244309, PubMed:16079912, PubMed:17583734, PubMed:18697946, PubMed:31619516, PubMed:32668259, PubMed:7477400, PubMed:9354468, PubMed:9782128). Newly synthesized alpha and beta chains forms a heterodimer (MHCII) that associates with the CD74/invariant chain (Ii) in the endoplasmic reticulum (ER). Ii is a trimer composed of three subunits and each subunit interacts with one MHCII dimer, blocking the peptide-binding cleft (PubMed:7479981). As a result, MHCII molecules cannot bind peptides present in the ER (PubMed:7479981). The complex of MHCII and CD74/Ii is transported in vesicles from ER to Golgi to lysosomes, where it encounters antigenic peptides generated via proteolysis of endocytosed antigens. MHCII dimers are dissociated from CD74/Ii by the combined action of proteolysis and HLA-DM (PubMed:21115828, PubMed:23260142, PubMed:25413013). Lysosomal enzymes such as cathepsin, degrade CD74/Ii leaving a 24 amino acid remnant called class II-associated Ii or CLIP. Interacts (via the peptide binding cleft) with CLIP; this interaction inhibits antigen peptide binding before entry in the endosomal compartment (PubMed:7477400, PubMed:9075930). The displacement of CLIP and replacement by a high affinity peptide in lysosomes is performed by HLA-DM heterodimer. HLA-DM catalyzes CLIP dissociation from MHCII, stabilizes empty MHCII and mediates the selection of high affinity peptides (PubMed:11070170, PubMed:23260142, PubMed:9075930). Interacts with HLA-DM heterodimer; this interaction is direct (PubMed:25413013). Interacts (via alpha-1 domain) with TCR (via CDRs) (PubMed:17334368, PubMed:29884618). Interacts (via alpha-2 domain) with CD4 (via Ig-like V-type domain); this interaction increases the affinity of TCR for peptide-MHCII (PubMed:27114505).</text>
</comment>
<comment type="subunit">
    <text evidence="7">(Microbial infection) Interacts with Epstein-Barr virus BZLF2/gp42.</text>
</comment>
<comment type="subunit">
    <text evidence="6 19 21 27 40">(Microbial infection) Interacts with Staphylococcus aureus enterotoxin A/entA, enterotoxin B/entB, enterotoxin C1/entC1, enterotoxin D/entD, and enterotoxin H/entH.</text>
</comment>
<comment type="subcellular location">
    <subcellularLocation>
        <location evidence="10 15 30">Cell membrane</location>
        <topology evidence="1">Single-pass type I membrane protein</topology>
    </subcellularLocation>
    <subcellularLocation>
        <location evidence="15">Endoplasmic reticulum membrane</location>
        <topology evidence="1">Single-pass type I membrane protein</topology>
    </subcellularLocation>
    <subcellularLocation>
        <location evidence="17">Early endosome membrane</location>
        <topology evidence="1">Single-pass type I membrane protein</topology>
    </subcellularLocation>
    <subcellularLocation>
        <location evidence="15 17 41">Late endosome membrane</location>
        <topology evidence="1">Single-pass type I membrane protein</topology>
    </subcellularLocation>
    <subcellularLocation>
        <location evidence="15 41">Lysosome membrane</location>
        <topology evidence="1">Single-pass type I membrane protein</topology>
    </subcellularLocation>
    <subcellularLocation>
        <location evidence="12">Autolysosome membrane</location>
        <topology>Single-pass type I membrane protein</topology>
    </subcellularLocation>
    <text evidence="10 15 30 41">The MHCII complex transits through a number of intracellular compartments in the endocytic pathway until it reaches the cell membrane for antigen presentation (PubMed:18305173, PubMed:9075930). Component of immunological synapses at the interface between T cell and APC (PubMed:15322540, PubMed:29884618).</text>
</comment>
<comment type="tissue specificity">
    <text evidence="10 24 31">Expressed in professional APCs: macrophages, dendritic cells and B cells (at protein level) (PubMed:15322540, PubMed:23783831, PubMed:31495665). Expressed in thymic epithelial cells (at protein level) (PubMed:23783831).</text>
</comment>
<comment type="induction">
    <text evidence="10">Up-regulated in dendritic cells upon maturation.</text>
</comment>
<comment type="domain">
    <text evidence="14 30 39 42 43">The alpha-1 domain is a structural part of the peptide-binding cleft. It contains one alpha helix and 4 beta sheets, respectively forming part of the wall and the floor of the peptide-binding cleft. The other 4 beta sheets of the floor and the second alpha helix wall is formed by the beta-1 domain of HLA-DRB. Forms hydrogen bonds with the peptide main chain via conserved amino acids (PubMed:17583734, PubMed:29884618, PubMed:8145819, PubMed:9354468, PubMed:9782128). The peptide-bound alpha-1 domain forms hydrogen bonds with CDR2 and CDR3 alpha-domain of TCR (PubMed:29884618).</text>
</comment>
<comment type="domain">
    <text evidence="28">The alpha-2 Ig-like domain mediates the interaction with CD4 coreceptor.</text>
</comment>
<comment type="PTM">
    <text evidence="17">Ubiquitinated by MARCHF1 or MARCHF8 at Lys-244 leading to down-regulation of MHCII. When associated with ubiquitination of the beta chain at 'Lys-254', the down-regulation of MHCII may be highly effective.</text>
</comment>
<comment type="polymorphism">
    <text>The following alleles of DRA are known: DRA*01:01 and DRA*01:02. The sequence shown is that of DRA*01:02.</text>
</comment>
<comment type="similarity">
    <text evidence="44">Belongs to the MHC class II family.</text>
</comment>
<comment type="sequence caution" evidence="44">
    <conflict type="erroneous initiation">
        <sequence resource="EMBL-CDS" id="CAA25076"/>
    </conflict>
    <text>Truncated N-terminus.</text>
</comment>
<proteinExistence type="evidence at protein level"/>
<accession>P01903</accession>
<accession>A2BET4</accession>
<accession>Q30160</accession>
<accession>Q6IAZ1</accession>
<accession>Q861I2</accession>
<accession>Q9TP70</accession>
<dbReference type="EMBL" id="J00194">
    <property type="protein sequence ID" value="AAA36275.1"/>
    <property type="molecule type" value="mRNA"/>
</dbReference>
<dbReference type="EMBL" id="K01171">
    <property type="protein sequence ID" value="AAA59785.1"/>
    <property type="molecule type" value="mRNA"/>
</dbReference>
<dbReference type="EMBL" id="M60334">
    <property type="protein sequence ID" value="AAA59783.1"/>
    <property type="molecule type" value="mRNA"/>
</dbReference>
<dbReference type="EMBL" id="X00274">
    <property type="protein sequence ID" value="CAA25076.1"/>
    <property type="status" value="ALT_INIT"/>
    <property type="molecule type" value="Genomic_DNA"/>
</dbReference>
<dbReference type="EMBL" id="J00204">
    <property type="protein sequence ID" value="AAA36302.1"/>
    <property type="molecule type" value="Genomic_DNA"/>
</dbReference>
<dbReference type="EMBL" id="J00203">
    <property type="protein sequence ID" value="AAA36302.1"/>
    <property type="status" value="JOINED"/>
    <property type="molecule type" value="Genomic_DNA"/>
</dbReference>
<dbReference type="EMBL" id="CR457013">
    <property type="protein sequence ID" value="CAG33294.1"/>
    <property type="molecule type" value="mRNA"/>
</dbReference>
<dbReference type="EMBL" id="AL662796">
    <property type="status" value="NOT_ANNOTATED_CDS"/>
    <property type="molecule type" value="Genomic_DNA"/>
</dbReference>
<dbReference type="EMBL" id="AL670296">
    <property type="status" value="NOT_ANNOTATED_CDS"/>
    <property type="molecule type" value="Genomic_DNA"/>
</dbReference>
<dbReference type="EMBL" id="AL935032">
    <property type="status" value="NOT_ANNOTATED_CDS"/>
    <property type="molecule type" value="Genomic_DNA"/>
</dbReference>
<dbReference type="EMBL" id="BX120007">
    <property type="status" value="NOT_ANNOTATED_CDS"/>
    <property type="molecule type" value="Genomic_DNA"/>
</dbReference>
<dbReference type="EMBL" id="Z84814">
    <property type="protein sequence ID" value="CAB06609.1"/>
    <property type="molecule type" value="Genomic_DNA"/>
</dbReference>
<dbReference type="EMBL" id="CH471081">
    <property type="protein sequence ID" value="EAX03630.1"/>
    <property type="molecule type" value="Genomic_DNA"/>
</dbReference>
<dbReference type="EMBL" id="V00523">
    <property type="protein sequence ID" value="CAA23782.1"/>
    <property type="molecule type" value="mRNA"/>
</dbReference>
<dbReference type="EMBL" id="J00201">
    <property type="protein sequence ID" value="AAA36301.1"/>
    <property type="molecule type" value="Genomic_DNA"/>
</dbReference>
<dbReference type="EMBL" id="AF481359">
    <property type="protein sequence ID" value="AAO23887.1"/>
    <property type="molecule type" value="Genomic_DNA"/>
</dbReference>
<dbReference type="EMBL" id="BC032350">
    <property type="protein sequence ID" value="AAH32350.1"/>
    <property type="molecule type" value="mRNA"/>
</dbReference>
<dbReference type="EMBL" id="BC071659">
    <property type="protein sequence ID" value="AAH71659.1"/>
    <property type="molecule type" value="mRNA"/>
</dbReference>
<dbReference type="CCDS" id="CCDS4750.1"/>
<dbReference type="PIR" id="A93952">
    <property type="entry name" value="HLHUDA"/>
</dbReference>
<dbReference type="RefSeq" id="NP_061984.2">
    <property type="nucleotide sequence ID" value="NM_019111.4"/>
</dbReference>
<dbReference type="PDB" id="1A6A">
    <property type="method" value="X-ray"/>
    <property type="resolution" value="2.75 A"/>
    <property type="chains" value="A=30-205"/>
</dbReference>
<dbReference type="PDB" id="1AQD">
    <property type="method" value="X-ray"/>
    <property type="resolution" value="2.45 A"/>
    <property type="chains" value="A/D/G/J=26-217"/>
</dbReference>
<dbReference type="PDB" id="1BX2">
    <property type="method" value="X-ray"/>
    <property type="resolution" value="2.60 A"/>
    <property type="chains" value="A/D=27-206"/>
</dbReference>
<dbReference type="PDB" id="1D5M">
    <property type="method" value="X-ray"/>
    <property type="resolution" value="2.00 A"/>
    <property type="chains" value="A=26-206"/>
</dbReference>
<dbReference type="PDB" id="1D5X">
    <property type="method" value="X-ray"/>
    <property type="resolution" value="2.45 A"/>
    <property type="chains" value="A=26-206"/>
</dbReference>
<dbReference type="PDB" id="1D5Z">
    <property type="method" value="X-ray"/>
    <property type="resolution" value="2.00 A"/>
    <property type="chains" value="A=26-206"/>
</dbReference>
<dbReference type="PDB" id="1D6E">
    <property type="method" value="X-ray"/>
    <property type="resolution" value="2.45 A"/>
    <property type="chains" value="A=26-206"/>
</dbReference>
<dbReference type="PDB" id="1DLH">
    <property type="method" value="X-ray"/>
    <property type="resolution" value="2.80 A"/>
    <property type="chains" value="A/D=28-207"/>
</dbReference>
<dbReference type="PDB" id="1FV1">
    <property type="method" value="X-ray"/>
    <property type="resolution" value="1.90 A"/>
    <property type="chains" value="A/D=26-206"/>
</dbReference>
<dbReference type="PDB" id="1FYT">
    <property type="method" value="X-ray"/>
    <property type="resolution" value="2.60 A"/>
    <property type="chains" value="A=26-206"/>
</dbReference>
<dbReference type="PDB" id="1H15">
    <property type="method" value="X-ray"/>
    <property type="resolution" value="3.10 A"/>
    <property type="chains" value="A/D=26-207"/>
</dbReference>
<dbReference type="PDB" id="1HQR">
    <property type="method" value="X-ray"/>
    <property type="resolution" value="3.20 A"/>
    <property type="chains" value="A=26-206"/>
</dbReference>
<dbReference type="PDB" id="1HXY">
    <property type="method" value="X-ray"/>
    <property type="resolution" value="2.60 A"/>
    <property type="chains" value="A=26-207"/>
</dbReference>
<dbReference type="PDB" id="1J8H">
    <property type="method" value="X-ray"/>
    <property type="resolution" value="2.40 A"/>
    <property type="chains" value="A=26-206"/>
</dbReference>
<dbReference type="PDB" id="1JWM">
    <property type="method" value="X-ray"/>
    <property type="resolution" value="2.70 A"/>
    <property type="chains" value="A=26-207"/>
</dbReference>
<dbReference type="PDB" id="1JWS">
    <property type="method" value="X-ray"/>
    <property type="resolution" value="2.60 A"/>
    <property type="chains" value="A=26-207"/>
</dbReference>
<dbReference type="PDB" id="1JWU">
    <property type="method" value="X-ray"/>
    <property type="resolution" value="2.30 A"/>
    <property type="chains" value="A=26-207"/>
</dbReference>
<dbReference type="PDB" id="1KG0">
    <property type="method" value="X-ray"/>
    <property type="resolution" value="2.65 A"/>
    <property type="chains" value="A=28-207"/>
</dbReference>
<dbReference type="PDB" id="1KLG">
    <property type="method" value="X-ray"/>
    <property type="resolution" value="2.40 A"/>
    <property type="chains" value="A=29-205"/>
</dbReference>
<dbReference type="PDB" id="1KLU">
    <property type="method" value="X-ray"/>
    <property type="resolution" value="1.93 A"/>
    <property type="chains" value="A=29-207"/>
</dbReference>
<dbReference type="PDB" id="1LO5">
    <property type="method" value="X-ray"/>
    <property type="resolution" value="3.20 A"/>
    <property type="chains" value="A=26-207"/>
</dbReference>
<dbReference type="PDB" id="1PYW">
    <property type="method" value="X-ray"/>
    <property type="resolution" value="2.10 A"/>
    <property type="chains" value="A=26-207"/>
</dbReference>
<dbReference type="PDB" id="1R5I">
    <property type="method" value="X-ray"/>
    <property type="resolution" value="2.60 A"/>
    <property type="chains" value="A/E=26-206"/>
</dbReference>
<dbReference type="PDB" id="1SEB">
    <property type="method" value="X-ray"/>
    <property type="resolution" value="2.70 A"/>
    <property type="chains" value="A/E=26-206"/>
</dbReference>
<dbReference type="PDB" id="1SJE">
    <property type="method" value="X-ray"/>
    <property type="resolution" value="2.45 A"/>
    <property type="chains" value="A=28-207"/>
</dbReference>
<dbReference type="PDB" id="1SJH">
    <property type="method" value="X-ray"/>
    <property type="resolution" value="2.25 A"/>
    <property type="chains" value="A=28-207"/>
</dbReference>
<dbReference type="PDB" id="1T5W">
    <property type="method" value="X-ray"/>
    <property type="resolution" value="2.40 A"/>
    <property type="chains" value="A/D=27-206"/>
</dbReference>
<dbReference type="PDB" id="1T5X">
    <property type="method" value="X-ray"/>
    <property type="resolution" value="2.50 A"/>
    <property type="chains" value="A=27-207"/>
</dbReference>
<dbReference type="PDB" id="1YMM">
    <property type="method" value="X-ray"/>
    <property type="resolution" value="3.50 A"/>
    <property type="chains" value="A=26-216"/>
</dbReference>
<dbReference type="PDB" id="1ZGL">
    <property type="method" value="X-ray"/>
    <property type="resolution" value="2.80 A"/>
    <property type="chains" value="A/D/G/J=26-206"/>
</dbReference>
<dbReference type="PDB" id="2FSE">
    <property type="method" value="X-ray"/>
    <property type="resolution" value="3.10 A"/>
    <property type="chains" value="A/C=29-205"/>
</dbReference>
<dbReference type="PDB" id="2G9H">
    <property type="method" value="X-ray"/>
    <property type="resolution" value="2.00 A"/>
    <property type="chains" value="A=26-207"/>
</dbReference>
<dbReference type="PDB" id="2IAM">
    <property type="method" value="X-ray"/>
    <property type="resolution" value="2.80 A"/>
    <property type="chains" value="A=26-207"/>
</dbReference>
<dbReference type="PDB" id="2IAN">
    <property type="method" value="X-ray"/>
    <property type="resolution" value="2.80 A"/>
    <property type="chains" value="A/F/K/P=26-207"/>
</dbReference>
<dbReference type="PDB" id="2ICW">
    <property type="method" value="X-ray"/>
    <property type="resolution" value="2.41 A"/>
    <property type="chains" value="A/D=28-206"/>
</dbReference>
<dbReference type="PDB" id="2IPK">
    <property type="method" value="X-ray"/>
    <property type="resolution" value="2.30 A"/>
    <property type="chains" value="A=26-207"/>
</dbReference>
<dbReference type="PDB" id="2OJE">
    <property type="method" value="X-ray"/>
    <property type="resolution" value="3.00 A"/>
    <property type="chains" value="A/E=27-206"/>
</dbReference>
<dbReference type="PDB" id="2Q6W">
    <property type="method" value="X-ray"/>
    <property type="resolution" value="2.25 A"/>
    <property type="chains" value="A/D=26-207"/>
</dbReference>
<dbReference type="PDB" id="2SEB">
    <property type="method" value="X-ray"/>
    <property type="resolution" value="2.50 A"/>
    <property type="chains" value="A=26-206"/>
</dbReference>
<dbReference type="PDB" id="2WBJ">
    <property type="method" value="X-ray"/>
    <property type="resolution" value="3.00 A"/>
    <property type="chains" value="A/E=26-218"/>
</dbReference>
<dbReference type="PDB" id="2XN9">
    <property type="method" value="X-ray"/>
    <property type="resolution" value="2.30 A"/>
    <property type="chains" value="D=26-207"/>
</dbReference>
<dbReference type="PDB" id="3C5J">
    <property type="method" value="X-ray"/>
    <property type="resolution" value="1.80 A"/>
    <property type="chains" value="A=26-206"/>
</dbReference>
<dbReference type="PDB" id="3L6F">
    <property type="method" value="X-ray"/>
    <property type="resolution" value="2.10 A"/>
    <property type="chains" value="A=26-207"/>
</dbReference>
<dbReference type="PDB" id="3O6F">
    <property type="method" value="X-ray"/>
    <property type="resolution" value="2.80 A"/>
    <property type="chains" value="A/E=26-207"/>
</dbReference>
<dbReference type="PDB" id="3PDO">
    <property type="method" value="X-ray"/>
    <property type="resolution" value="1.95 A"/>
    <property type="chains" value="A=26-217"/>
</dbReference>
<dbReference type="PDB" id="3PGC">
    <property type="method" value="X-ray"/>
    <property type="resolution" value="2.66 A"/>
    <property type="chains" value="A/D=26-217"/>
</dbReference>
<dbReference type="PDB" id="3PGD">
    <property type="method" value="X-ray"/>
    <property type="resolution" value="2.72 A"/>
    <property type="chains" value="A/D=26-217"/>
</dbReference>
<dbReference type="PDB" id="3QXA">
    <property type="method" value="X-ray"/>
    <property type="resolution" value="2.71 A"/>
    <property type="chains" value="A/D=26-207"/>
</dbReference>
<dbReference type="PDB" id="3QXD">
    <property type="method" value="X-ray"/>
    <property type="resolution" value="2.30 A"/>
    <property type="chains" value="A/D=26-207"/>
</dbReference>
<dbReference type="PDB" id="3S4S">
    <property type="method" value="X-ray"/>
    <property type="resolution" value="2.40 A"/>
    <property type="chains" value="A/D=26-207"/>
</dbReference>
<dbReference type="PDB" id="3S5L">
    <property type="method" value="X-ray"/>
    <property type="resolution" value="2.10 A"/>
    <property type="chains" value="A/D=26-207"/>
</dbReference>
<dbReference type="PDB" id="3T0E">
    <property type="method" value="X-ray"/>
    <property type="resolution" value="4.00 A"/>
    <property type="chains" value="A=26-207"/>
</dbReference>
<dbReference type="PDB" id="4AEN">
    <property type="method" value="X-ray"/>
    <property type="resolution" value="2.20 A"/>
    <property type="chains" value="A=26-217"/>
</dbReference>
<dbReference type="PDB" id="4AH2">
    <property type="method" value="X-ray"/>
    <property type="resolution" value="2.36 A"/>
    <property type="chains" value="A=26-217"/>
</dbReference>
<dbReference type="PDB" id="4C56">
    <property type="method" value="X-ray"/>
    <property type="resolution" value="2.90 A"/>
    <property type="chains" value="D/J=26-207"/>
</dbReference>
<dbReference type="PDB" id="4E41">
    <property type="method" value="X-ray"/>
    <property type="resolution" value="2.60 A"/>
    <property type="chains" value="A/F=26-207"/>
</dbReference>
<dbReference type="PDB" id="4FQX">
    <property type="method" value="X-ray"/>
    <property type="resolution" value="2.60 A"/>
    <property type="chains" value="A=26-216"/>
</dbReference>
<dbReference type="PDB" id="4GBX">
    <property type="method" value="X-ray"/>
    <property type="resolution" value="3.00 A"/>
    <property type="chains" value="A=26-216"/>
</dbReference>
<dbReference type="PDB" id="4H1L">
    <property type="method" value="X-ray"/>
    <property type="resolution" value="3.30 A"/>
    <property type="chains" value="A/D=28-205"/>
</dbReference>
<dbReference type="PDB" id="4H25">
    <property type="method" value="X-ray"/>
    <property type="resolution" value="2.20 A"/>
    <property type="chains" value="A/D=28-207"/>
</dbReference>
<dbReference type="PDB" id="4H26">
    <property type="method" value="X-ray"/>
    <property type="resolution" value="2.50 A"/>
    <property type="chains" value="A/D=28-206"/>
</dbReference>
<dbReference type="PDB" id="4I5B">
    <property type="method" value="X-ray"/>
    <property type="resolution" value="2.12 A"/>
    <property type="chains" value="A/D=27-213"/>
</dbReference>
<dbReference type="PDB" id="4IS6">
    <property type="method" value="X-ray"/>
    <property type="resolution" value="2.50 A"/>
    <property type="chains" value="A=26-207"/>
</dbReference>
<dbReference type="PDB" id="4MCY">
    <property type="method" value="X-ray"/>
    <property type="resolution" value="2.30 A"/>
    <property type="chains" value="A=26-206"/>
</dbReference>
<dbReference type="PDB" id="4MCZ">
    <property type="method" value="X-ray"/>
    <property type="resolution" value="2.41 A"/>
    <property type="chains" value="A=26-206"/>
</dbReference>
<dbReference type="PDB" id="4MD0">
    <property type="method" value="X-ray"/>
    <property type="resolution" value="2.19 A"/>
    <property type="chains" value="A=26-206"/>
</dbReference>
<dbReference type="PDB" id="4MD4">
    <property type="method" value="X-ray"/>
    <property type="resolution" value="1.95 A"/>
    <property type="chains" value="A=26-206"/>
</dbReference>
<dbReference type="PDB" id="4MD5">
    <property type="method" value="X-ray"/>
    <property type="resolution" value="1.65 A"/>
    <property type="chains" value="A=26-206"/>
</dbReference>
<dbReference type="PDB" id="4MDI">
    <property type="method" value="X-ray"/>
    <property type="resolution" value="2.00 A"/>
    <property type="chains" value="A=26-206"/>
</dbReference>
<dbReference type="PDB" id="4MDJ">
    <property type="method" value="X-ray"/>
    <property type="resolution" value="1.70 A"/>
    <property type="chains" value="A=26-206"/>
</dbReference>
<dbReference type="PDB" id="4OV5">
    <property type="method" value="X-ray"/>
    <property type="resolution" value="2.20 A"/>
    <property type="chains" value="A/D/G/J/M/P=26-207"/>
</dbReference>
<dbReference type="PDB" id="4X5W">
    <property type="method" value="X-ray"/>
    <property type="resolution" value="1.34 A"/>
    <property type="chains" value="A=26-217"/>
</dbReference>
<dbReference type="PDB" id="4X5X">
    <property type="method" value="X-ray"/>
    <property type="resolution" value="3.20 A"/>
    <property type="chains" value="A/C=26-217"/>
</dbReference>
<dbReference type="PDB" id="4Y19">
    <property type="method" value="X-ray"/>
    <property type="resolution" value="2.50 A"/>
    <property type="chains" value="A=26-206"/>
</dbReference>
<dbReference type="PDB" id="4Y1A">
    <property type="method" value="X-ray"/>
    <property type="resolution" value="4.00 A"/>
    <property type="chains" value="A=26-206"/>
</dbReference>
<dbReference type="PDB" id="5JLZ">
    <property type="method" value="X-ray"/>
    <property type="resolution" value="1.99 A"/>
    <property type="chains" value="A/C=26-206"/>
</dbReference>
<dbReference type="PDB" id="5LAX">
    <property type="method" value="X-ray"/>
    <property type="resolution" value="2.60 A"/>
    <property type="chains" value="A/C=26-206"/>
</dbReference>
<dbReference type="PDB" id="5NI9">
    <property type="method" value="X-ray"/>
    <property type="resolution" value="1.33 A"/>
    <property type="chains" value="A=26-206"/>
</dbReference>
<dbReference type="PDB" id="5NIG">
    <property type="method" value="X-ray"/>
    <property type="resolution" value="1.35 A"/>
    <property type="chains" value="A=26-206"/>
</dbReference>
<dbReference type="PDB" id="5V4M">
    <property type="method" value="X-ray"/>
    <property type="resolution" value="2.10 A"/>
    <property type="chains" value="A/D/G/J=26-206"/>
</dbReference>
<dbReference type="PDB" id="5V4N">
    <property type="method" value="X-ray"/>
    <property type="resolution" value="3.40 A"/>
    <property type="chains" value="A/D=26-206"/>
</dbReference>
<dbReference type="PDB" id="6ATF">
    <property type="method" value="X-ray"/>
    <property type="resolution" value="1.90 A"/>
    <property type="chains" value="A/D=26-206"/>
</dbReference>
<dbReference type="PDB" id="6ATI">
    <property type="method" value="X-ray"/>
    <property type="resolution" value="1.98 A"/>
    <property type="chains" value="A/D=26-206"/>
</dbReference>
<dbReference type="PDB" id="6ATZ">
    <property type="method" value="X-ray"/>
    <property type="resolution" value="2.70 A"/>
    <property type="chains" value="A/C=29-205"/>
</dbReference>
<dbReference type="PDB" id="6BIJ">
    <property type="method" value="X-ray"/>
    <property type="resolution" value="2.10 A"/>
    <property type="chains" value="A=29-205"/>
</dbReference>
<dbReference type="PDB" id="6BIL">
    <property type="method" value="X-ray"/>
    <property type="resolution" value="2.40 A"/>
    <property type="chains" value="A=26-206"/>
</dbReference>
<dbReference type="PDB" id="6BIN">
    <property type="method" value="X-ray"/>
    <property type="resolution" value="2.50 A"/>
    <property type="chains" value="A=30-206"/>
</dbReference>
<dbReference type="PDB" id="6BIR">
    <property type="method" value="X-ray"/>
    <property type="resolution" value="2.30 A"/>
    <property type="chains" value="A=26-206"/>
</dbReference>
<dbReference type="PDB" id="6BIV">
    <property type="method" value="X-ray"/>
    <property type="resolution" value="2.90 A"/>
    <property type="chains" value="B=26-206"/>
</dbReference>
<dbReference type="PDB" id="6BIX">
    <property type="method" value="X-ray"/>
    <property type="resolution" value="2.20 A"/>
    <property type="chains" value="A=26-206"/>
</dbReference>
<dbReference type="PDB" id="6BIY">
    <property type="method" value="X-ray"/>
    <property type="resolution" value="2.05 A"/>
    <property type="chains" value="A=26-206"/>
</dbReference>
<dbReference type="PDB" id="6BIZ">
    <property type="method" value="X-ray"/>
    <property type="resolution" value="2.10 A"/>
    <property type="chains" value="A=26-206"/>
</dbReference>
<dbReference type="PDB" id="6CPL">
    <property type="method" value="X-ray"/>
    <property type="resolution" value="2.45 A"/>
    <property type="chains" value="A=26-254"/>
</dbReference>
<dbReference type="PDB" id="6CPN">
    <property type="method" value="X-ray"/>
    <property type="resolution" value="2.00 A"/>
    <property type="chains" value="A=26-206"/>
</dbReference>
<dbReference type="PDB" id="6CPO">
    <property type="method" value="X-ray"/>
    <property type="resolution" value="2.40 A"/>
    <property type="chains" value="A/D=26-207"/>
</dbReference>
<dbReference type="PDB" id="6CQJ">
    <property type="method" value="X-ray"/>
    <property type="resolution" value="2.75 A"/>
    <property type="chains" value="A/D/G=26-207"/>
</dbReference>
<dbReference type="PDB" id="6CQL">
    <property type="method" value="X-ray"/>
    <property type="resolution" value="2.40 A"/>
    <property type="chains" value="A=26-206"/>
</dbReference>
<dbReference type="PDB" id="6CQN">
    <property type="method" value="X-ray"/>
    <property type="resolution" value="2.50 A"/>
    <property type="chains" value="A=26-206"/>
</dbReference>
<dbReference type="PDB" id="6CQQ">
    <property type="method" value="X-ray"/>
    <property type="resolution" value="2.80 A"/>
    <property type="chains" value="A/F=26-207"/>
</dbReference>
<dbReference type="PDB" id="6CQR">
    <property type="method" value="X-ray"/>
    <property type="resolution" value="3.04 A"/>
    <property type="chains" value="A/F=26-207"/>
</dbReference>
<dbReference type="PDB" id="6NIX">
    <property type="method" value="X-ray"/>
    <property type="resolution" value="2.10 A"/>
    <property type="chains" value="A=30-206"/>
</dbReference>
<dbReference type="PDB" id="6QZA">
    <property type="method" value="X-ray"/>
    <property type="resolution" value="3.09 A"/>
    <property type="chains" value="AAA/DDD=26-207"/>
</dbReference>
<dbReference type="PDB" id="6QZC">
    <property type="method" value="X-ray"/>
    <property type="resolution" value="1.64 A"/>
    <property type="chains" value="AAA=28-207"/>
</dbReference>
<dbReference type="PDB" id="6QZD">
    <property type="method" value="X-ray"/>
    <property type="resolution" value="2.66 A"/>
    <property type="chains" value="AAA/DDD=28-207"/>
</dbReference>
<dbReference type="PDB" id="6R0E">
    <property type="method" value="X-ray"/>
    <property type="resolution" value="1.91 A"/>
    <property type="chains" value="AAA=26-207"/>
</dbReference>
<dbReference type="PDB" id="6V0Y">
    <property type="method" value="X-ray"/>
    <property type="resolution" value="2.70 A"/>
    <property type="chains" value="A=26-206"/>
</dbReference>
<dbReference type="PDB" id="6V13">
    <property type="method" value="X-ray"/>
    <property type="resolution" value="2.75 A"/>
    <property type="chains" value="A=30-206"/>
</dbReference>
<dbReference type="PDB" id="6V15">
    <property type="method" value="X-ray"/>
    <property type="resolution" value="2.80 A"/>
    <property type="chains" value="A=30-206"/>
</dbReference>
<dbReference type="PDB" id="6V18">
    <property type="method" value="X-ray"/>
    <property type="resolution" value="2.35 A"/>
    <property type="chains" value="A=26-206"/>
</dbReference>
<dbReference type="PDB" id="6V19">
    <property type="method" value="X-ray"/>
    <property type="resolution" value="2.60 A"/>
    <property type="chains" value="A=26-206"/>
</dbReference>
<dbReference type="PDB" id="6V1A">
    <property type="method" value="X-ray"/>
    <property type="resolution" value="2.29 A"/>
    <property type="chains" value="A=26-206"/>
</dbReference>
<dbReference type="PDB" id="7N19">
    <property type="method" value="X-ray"/>
    <property type="resolution" value="2.38 A"/>
    <property type="chains" value="A/D/G/J=26-206"/>
</dbReference>
<dbReference type="PDB" id="7NZE">
    <property type="method" value="X-ray"/>
    <property type="resolution" value="2.05 A"/>
    <property type="chains" value="AAA/CCC=27-208"/>
</dbReference>
<dbReference type="PDB" id="7O00">
    <property type="method" value="X-ray"/>
    <property type="resolution" value="2.24 A"/>
    <property type="chains" value="AAA=29-205"/>
</dbReference>
<dbReference type="PDB" id="7YX9">
    <property type="method" value="X-ray"/>
    <property type="resolution" value="1.76 A"/>
    <property type="chains" value="A/C=26-216"/>
</dbReference>
<dbReference type="PDB" id="7YXB">
    <property type="method" value="X-ray"/>
    <property type="resolution" value="2.10 A"/>
    <property type="chains" value="A/C=26-216"/>
</dbReference>
<dbReference type="PDB" id="7Z0Q">
    <property type="method" value="X-ray"/>
    <property type="resolution" value="2.10 A"/>
    <property type="chains" value="C=26-217"/>
</dbReference>
<dbReference type="PDB" id="8CMB">
    <property type="method" value="X-ray"/>
    <property type="resolution" value="1.84 A"/>
    <property type="chains" value="A=26-207"/>
</dbReference>
<dbReference type="PDB" id="8CMC">
    <property type="method" value="X-ray"/>
    <property type="resolution" value="1.42 A"/>
    <property type="chains" value="A=26-207"/>
</dbReference>
<dbReference type="PDB" id="8CMD">
    <property type="method" value="X-ray"/>
    <property type="resolution" value="2.54 A"/>
    <property type="chains" value="A/D/G=26-207"/>
</dbReference>
<dbReference type="PDB" id="8CME">
    <property type="method" value="X-ray"/>
    <property type="resolution" value="2.26 A"/>
    <property type="chains" value="A/D/G=26-207"/>
</dbReference>
<dbReference type="PDB" id="8CMF">
    <property type="method" value="X-ray"/>
    <property type="resolution" value="2.20 A"/>
    <property type="chains" value="A/D=26-207"/>
</dbReference>
<dbReference type="PDB" id="8CMG">
    <property type="method" value="X-ray"/>
    <property type="resolution" value="1.64 A"/>
    <property type="chains" value="A=26-207"/>
</dbReference>
<dbReference type="PDB" id="8CMH">
    <property type="method" value="X-ray"/>
    <property type="resolution" value="1.64 A"/>
    <property type="chains" value="A=26-207"/>
</dbReference>
<dbReference type="PDB" id="8CMI">
    <property type="method" value="X-ray"/>
    <property type="resolution" value="2.60 A"/>
    <property type="chains" value="A/D/G=26-207"/>
</dbReference>
<dbReference type="PDB" id="8EUQ">
    <property type="method" value="X-ray"/>
    <property type="resolution" value="3.09 A"/>
    <property type="chains" value="A/F=28-206"/>
</dbReference>
<dbReference type="PDB" id="8PJE">
    <property type="method" value="X-ray"/>
    <property type="resolution" value="1.70 A"/>
    <property type="chains" value="A/D=26-207"/>
</dbReference>
<dbReference type="PDB" id="8PJF">
    <property type="method" value="X-ray"/>
    <property type="resolution" value="1.48 A"/>
    <property type="chains" value="A=26-207"/>
</dbReference>
<dbReference type="PDB" id="8PJG">
    <property type="method" value="X-ray"/>
    <property type="resolution" value="1.83 A"/>
    <property type="chains" value="A=26-207"/>
</dbReference>
<dbReference type="PDB" id="8TBP">
    <property type="method" value="X-ray"/>
    <property type="resolution" value="3.13 A"/>
    <property type="chains" value="A/C=26-207"/>
</dbReference>
<dbReference type="PDB" id="8TRL">
    <property type="method" value="X-ray"/>
    <property type="resolution" value="2.40 A"/>
    <property type="chains" value="A/D=26-206"/>
</dbReference>
<dbReference type="PDB" id="8TRQ">
    <property type="method" value="X-ray"/>
    <property type="resolution" value="2.75 A"/>
    <property type="chains" value="A=30-206"/>
</dbReference>
<dbReference type="PDB" id="8TRR">
    <property type="method" value="X-ray"/>
    <property type="resolution" value="2.65 A"/>
    <property type="chains" value="A/F=26-206"/>
</dbReference>
<dbReference type="PDB" id="8VRW">
    <property type="method" value="EM"/>
    <property type="resolution" value="3.03 A"/>
    <property type="chains" value="A/D/G=1-254"/>
</dbReference>
<dbReference type="PDB" id="8VSJ">
    <property type="method" value="EM"/>
    <property type="resolution" value="2.28 A"/>
    <property type="chains" value="A=26-207"/>
</dbReference>
<dbReference type="PDB" id="9B7B">
    <property type="method" value="X-ray"/>
    <property type="resolution" value="3.08 A"/>
    <property type="chains" value="A/E=26-206"/>
</dbReference>
<dbReference type="PDB" id="9BF9">
    <property type="method" value="X-ray"/>
    <property type="resolution" value="3.40 A"/>
    <property type="chains" value="A=30-206"/>
</dbReference>
<dbReference type="PDBsum" id="1A6A"/>
<dbReference type="PDBsum" id="1AQD"/>
<dbReference type="PDBsum" id="1BX2"/>
<dbReference type="PDBsum" id="1D5M"/>
<dbReference type="PDBsum" id="1D5X"/>
<dbReference type="PDBsum" id="1D5Z"/>
<dbReference type="PDBsum" id="1D6E"/>
<dbReference type="PDBsum" id="1DLH"/>
<dbReference type="PDBsum" id="1FV1"/>
<dbReference type="PDBsum" id="1FYT"/>
<dbReference type="PDBsum" id="1H15"/>
<dbReference type="PDBsum" id="1HQR"/>
<dbReference type="PDBsum" id="1HXY"/>
<dbReference type="PDBsum" id="1J8H"/>
<dbReference type="PDBsum" id="1JWM"/>
<dbReference type="PDBsum" id="1JWS"/>
<dbReference type="PDBsum" id="1JWU"/>
<dbReference type="PDBsum" id="1KG0"/>
<dbReference type="PDBsum" id="1KLG"/>
<dbReference type="PDBsum" id="1KLU"/>
<dbReference type="PDBsum" id="1LO5"/>
<dbReference type="PDBsum" id="1PYW"/>
<dbReference type="PDBsum" id="1R5I"/>
<dbReference type="PDBsum" id="1SEB"/>
<dbReference type="PDBsum" id="1SJE"/>
<dbReference type="PDBsum" id="1SJH"/>
<dbReference type="PDBsum" id="1T5W"/>
<dbReference type="PDBsum" id="1T5X"/>
<dbReference type="PDBsum" id="1YMM"/>
<dbReference type="PDBsum" id="1ZGL"/>
<dbReference type="PDBsum" id="2FSE"/>
<dbReference type="PDBsum" id="2G9H"/>
<dbReference type="PDBsum" id="2IAM"/>
<dbReference type="PDBsum" id="2IAN"/>
<dbReference type="PDBsum" id="2ICW"/>
<dbReference type="PDBsum" id="2IPK"/>
<dbReference type="PDBsum" id="2OJE"/>
<dbReference type="PDBsum" id="2Q6W"/>
<dbReference type="PDBsum" id="2SEB"/>
<dbReference type="PDBsum" id="2WBJ"/>
<dbReference type="PDBsum" id="2XN9"/>
<dbReference type="PDBsum" id="3C5J"/>
<dbReference type="PDBsum" id="3L6F"/>
<dbReference type="PDBsum" id="3O6F"/>
<dbReference type="PDBsum" id="3PDO"/>
<dbReference type="PDBsum" id="3PGC"/>
<dbReference type="PDBsum" id="3PGD"/>
<dbReference type="PDBsum" id="3QXA"/>
<dbReference type="PDBsum" id="3QXD"/>
<dbReference type="PDBsum" id="3S4S"/>
<dbReference type="PDBsum" id="3S5L"/>
<dbReference type="PDBsum" id="3T0E"/>
<dbReference type="PDBsum" id="4AEN"/>
<dbReference type="PDBsum" id="4AH2"/>
<dbReference type="PDBsum" id="4C56"/>
<dbReference type="PDBsum" id="4E41"/>
<dbReference type="PDBsum" id="4FQX"/>
<dbReference type="PDBsum" id="4GBX"/>
<dbReference type="PDBsum" id="4H1L"/>
<dbReference type="PDBsum" id="4H25"/>
<dbReference type="PDBsum" id="4H26"/>
<dbReference type="PDBsum" id="4I5B"/>
<dbReference type="PDBsum" id="4IS6"/>
<dbReference type="PDBsum" id="4MCY"/>
<dbReference type="PDBsum" id="4MCZ"/>
<dbReference type="PDBsum" id="4MD0"/>
<dbReference type="PDBsum" id="4MD4"/>
<dbReference type="PDBsum" id="4MD5"/>
<dbReference type="PDBsum" id="4MDI"/>
<dbReference type="PDBsum" id="4MDJ"/>
<dbReference type="PDBsum" id="4OV5"/>
<dbReference type="PDBsum" id="4X5W"/>
<dbReference type="PDBsum" id="4X5X"/>
<dbReference type="PDBsum" id="4Y19"/>
<dbReference type="PDBsum" id="4Y1A"/>
<dbReference type="PDBsum" id="5JLZ"/>
<dbReference type="PDBsum" id="5LAX"/>
<dbReference type="PDBsum" id="5NI9"/>
<dbReference type="PDBsum" id="5NIG"/>
<dbReference type="PDBsum" id="5V4M"/>
<dbReference type="PDBsum" id="5V4N"/>
<dbReference type="PDBsum" id="6ATF"/>
<dbReference type="PDBsum" id="6ATI"/>
<dbReference type="PDBsum" id="6ATZ"/>
<dbReference type="PDBsum" id="6BIJ"/>
<dbReference type="PDBsum" id="6BIL"/>
<dbReference type="PDBsum" id="6BIN"/>
<dbReference type="PDBsum" id="6BIR"/>
<dbReference type="PDBsum" id="6BIV"/>
<dbReference type="PDBsum" id="6BIX"/>
<dbReference type="PDBsum" id="6BIY"/>
<dbReference type="PDBsum" id="6BIZ"/>
<dbReference type="PDBsum" id="6CPL"/>
<dbReference type="PDBsum" id="6CPN"/>
<dbReference type="PDBsum" id="6CPO"/>
<dbReference type="PDBsum" id="6CQJ"/>
<dbReference type="PDBsum" id="6CQL"/>
<dbReference type="PDBsum" id="6CQN"/>
<dbReference type="PDBsum" id="6CQQ"/>
<dbReference type="PDBsum" id="6CQR"/>
<dbReference type="PDBsum" id="6NIX"/>
<dbReference type="PDBsum" id="6QZA"/>
<dbReference type="PDBsum" id="6QZC"/>
<dbReference type="PDBsum" id="6QZD"/>
<dbReference type="PDBsum" id="6R0E"/>
<dbReference type="PDBsum" id="6V0Y"/>
<dbReference type="PDBsum" id="6V13"/>
<dbReference type="PDBsum" id="6V15"/>
<dbReference type="PDBsum" id="6V18"/>
<dbReference type="PDBsum" id="6V19"/>
<dbReference type="PDBsum" id="6V1A"/>
<dbReference type="PDBsum" id="7N19"/>
<dbReference type="PDBsum" id="7NZE"/>
<dbReference type="PDBsum" id="7O00"/>
<dbReference type="PDBsum" id="7YX9"/>
<dbReference type="PDBsum" id="7YXB"/>
<dbReference type="PDBsum" id="7Z0Q"/>
<dbReference type="PDBsum" id="8CMB"/>
<dbReference type="PDBsum" id="8CMC"/>
<dbReference type="PDBsum" id="8CMD"/>
<dbReference type="PDBsum" id="8CME"/>
<dbReference type="PDBsum" id="8CMF"/>
<dbReference type="PDBsum" id="8CMG"/>
<dbReference type="PDBsum" id="8CMH"/>
<dbReference type="PDBsum" id="8CMI"/>
<dbReference type="PDBsum" id="8EUQ"/>
<dbReference type="PDBsum" id="8PJE"/>
<dbReference type="PDBsum" id="8PJF"/>
<dbReference type="PDBsum" id="8PJG"/>
<dbReference type="PDBsum" id="8TBP"/>
<dbReference type="PDBsum" id="8TRL"/>
<dbReference type="PDBsum" id="8TRQ"/>
<dbReference type="PDBsum" id="8TRR"/>
<dbReference type="PDBsum" id="8VRW"/>
<dbReference type="PDBsum" id="8VSJ"/>
<dbReference type="PDBsum" id="9B7B"/>
<dbReference type="PDBsum" id="9BF9"/>
<dbReference type="EMDB" id="EMD-43488"/>
<dbReference type="EMDB" id="EMD-43499"/>
<dbReference type="SMR" id="P01903"/>
<dbReference type="BioGRID" id="109367">
    <property type="interactions" value="234"/>
</dbReference>
<dbReference type="CORUM" id="P01903"/>
<dbReference type="DIP" id="DIP-6063N"/>
<dbReference type="FunCoup" id="P01903">
    <property type="interactions" value="578"/>
</dbReference>
<dbReference type="IntAct" id="P01903">
    <property type="interactions" value="156"/>
</dbReference>
<dbReference type="MINT" id="P01903"/>
<dbReference type="STRING" id="9606.ENSP00000378786"/>
<dbReference type="DrugBank" id="DB05121">
    <property type="generic name" value="1D09C3"/>
</dbReference>
<dbReference type="DrugBank" id="DB11294">
    <property type="generic name" value="Coccidioides immitis spherule"/>
</dbReference>
<dbReference type="Allergome" id="8362">
    <property type="allergen name" value="Hom s HLA-DR-alpha"/>
</dbReference>
<dbReference type="GlyConnect" id="1368">
    <property type="glycosylation" value="16 N-Linked glycans (2 sites)"/>
</dbReference>
<dbReference type="GlyCosmos" id="P01903">
    <property type="glycosylation" value="2 sites, 14 glycans"/>
</dbReference>
<dbReference type="GlyGen" id="P01903">
    <property type="glycosylation" value="4 sites, 85 N-linked glycans (2 sites)"/>
</dbReference>
<dbReference type="iPTMnet" id="P01903"/>
<dbReference type="PhosphoSitePlus" id="P01903"/>
<dbReference type="SwissPalm" id="P01903"/>
<dbReference type="BioMuta" id="HLA-DRA"/>
<dbReference type="DMDM" id="122206"/>
<dbReference type="jPOST" id="P01903"/>
<dbReference type="MassIVE" id="P01903"/>
<dbReference type="PaxDb" id="9606-ENSP00000378786"/>
<dbReference type="PeptideAtlas" id="P01903"/>
<dbReference type="ProteomicsDB" id="51508"/>
<dbReference type="Pumba" id="P01903"/>
<dbReference type="ABCD" id="P01903">
    <property type="antibodies" value="22 sequenced antibodies"/>
</dbReference>
<dbReference type="Antibodypedia" id="28584">
    <property type="antibodies" value="1845 antibodies from 47 providers"/>
</dbReference>
<dbReference type="CPTC" id="P01903">
    <property type="antibodies" value="1 antibody"/>
</dbReference>
<dbReference type="DNASU" id="3122"/>
<dbReference type="Ensembl" id="ENST00000383127.6">
    <property type="protein sequence ID" value="ENSP00000372608.2"/>
    <property type="gene ID" value="ENSG00000227993.9"/>
</dbReference>
<dbReference type="Ensembl" id="ENST00000383259.6">
    <property type="protein sequence ID" value="ENSP00000372746.2"/>
    <property type="gene ID" value="ENSG00000206308.11"/>
</dbReference>
<dbReference type="Ensembl" id="ENST00000395388.7">
    <property type="protein sequence ID" value="ENSP00000378786.2"/>
    <property type="gene ID" value="ENSG00000204287.14"/>
</dbReference>
<dbReference type="Ensembl" id="ENST00000411524.6">
    <property type="protein sequence ID" value="ENSP00000405295.2"/>
    <property type="gene ID" value="ENSG00000234794.9"/>
</dbReference>
<dbReference type="Ensembl" id="ENST00000414698.6">
    <property type="protein sequence ID" value="ENSP00000402951.2"/>
    <property type="gene ID" value="ENSG00000230726.9"/>
</dbReference>
<dbReference type="Ensembl" id="ENST00000416883.6">
    <property type="protein sequence ID" value="ENSP00000410443.2"/>
    <property type="gene ID" value="ENSG00000228987.9"/>
</dbReference>
<dbReference type="Ensembl" id="ENST00000442960.6">
    <property type="protein sequence ID" value="ENSP00000404533.2"/>
    <property type="gene ID" value="ENSG00000226260.9"/>
</dbReference>
<dbReference type="Ensembl" id="ENST00000613328.1">
    <property type="protein sequence ID" value="ENSP00000479287.1"/>
    <property type="gene ID" value="ENSG00000277263.1"/>
</dbReference>
<dbReference type="GeneID" id="3122"/>
<dbReference type="KEGG" id="hsa:3122"/>
<dbReference type="MANE-Select" id="ENST00000395388.7">
    <property type="protein sequence ID" value="ENSP00000378786.2"/>
    <property type="RefSeq nucleotide sequence ID" value="NM_019111.5"/>
    <property type="RefSeq protein sequence ID" value="NP_061984.2"/>
</dbReference>
<dbReference type="UCSC" id="uc003obh.5">
    <property type="organism name" value="human"/>
</dbReference>
<dbReference type="AGR" id="HGNC:4947"/>
<dbReference type="CTD" id="3122"/>
<dbReference type="DisGeNET" id="3122"/>
<dbReference type="GeneCards" id="HLA-DRA"/>
<dbReference type="HGNC" id="HGNC:4947">
    <property type="gene designation" value="HLA-DRA"/>
</dbReference>
<dbReference type="HPA" id="ENSG00000204287">
    <property type="expression patterns" value="Tissue enhanced (lung, lymphoid tissue)"/>
</dbReference>
<dbReference type="MalaCards" id="HLA-DRA"/>
<dbReference type="MIM" id="142860">
    <property type="type" value="gene"/>
</dbReference>
<dbReference type="MIM" id="610424">
    <property type="type" value="phenotype"/>
</dbReference>
<dbReference type="neXtProt" id="NX_P01903"/>
<dbReference type="OpenTargets" id="ENSG00000204287"/>
<dbReference type="Orphanet" id="505">
    <property type="disease" value="Graham Little-Piccardi-Lassueur syndrome"/>
</dbReference>
<dbReference type="PharmGKB" id="PA35071"/>
<dbReference type="VEuPathDB" id="HostDB:ENSG00000204287"/>
<dbReference type="eggNOG" id="ENOG502RXYJ">
    <property type="taxonomic scope" value="Eukaryota"/>
</dbReference>
<dbReference type="GeneTree" id="ENSGT00940000160997"/>
<dbReference type="HOGENOM" id="CLU_069380_0_0_1"/>
<dbReference type="InParanoid" id="P01903"/>
<dbReference type="OMA" id="QAEFYMT"/>
<dbReference type="PAN-GO" id="P01903">
    <property type="GO annotations" value="6 GO annotations based on evolutionary models"/>
</dbReference>
<dbReference type="PhylomeDB" id="P01903"/>
<dbReference type="TreeFam" id="TF333797"/>
<dbReference type="PathwayCommons" id="P01903"/>
<dbReference type="Reactome" id="R-HSA-202424">
    <property type="pathway name" value="Downstream TCR signaling"/>
</dbReference>
<dbReference type="Reactome" id="R-HSA-202427">
    <property type="pathway name" value="Phosphorylation of CD3 and TCR zeta chains"/>
</dbReference>
<dbReference type="Reactome" id="R-HSA-202430">
    <property type="pathway name" value="Translocation of ZAP-70 to Immunological synapse"/>
</dbReference>
<dbReference type="Reactome" id="R-HSA-202433">
    <property type="pathway name" value="Generation of second messenger molecules"/>
</dbReference>
<dbReference type="Reactome" id="R-HSA-2132295">
    <property type="pathway name" value="MHC class II antigen presentation"/>
</dbReference>
<dbReference type="Reactome" id="R-HSA-389948">
    <property type="pathway name" value="Co-inhibition by PD-1"/>
</dbReference>
<dbReference type="Reactome" id="R-HSA-877300">
    <property type="pathway name" value="Interferon gamma signaling"/>
</dbReference>
<dbReference type="SignaLink" id="P01903"/>
<dbReference type="SIGNOR" id="P01903"/>
<dbReference type="BioGRID-ORCS" id="3122">
    <property type="hits" value="13 hits in 1142 CRISPR screens"/>
</dbReference>
<dbReference type="ChiTaRS" id="HLA-DRA">
    <property type="organism name" value="human"/>
</dbReference>
<dbReference type="EvolutionaryTrace" id="P01903"/>
<dbReference type="GeneWiki" id="HLA-DRA"/>
<dbReference type="GenomeRNAi" id="3122"/>
<dbReference type="Pharos" id="P01903">
    <property type="development level" value="Tbio"/>
</dbReference>
<dbReference type="PRO" id="PR:P01903"/>
<dbReference type="Proteomes" id="UP000005640">
    <property type="component" value="Chromosome 6"/>
</dbReference>
<dbReference type="RNAct" id="P01903">
    <property type="molecule type" value="protein"/>
</dbReference>
<dbReference type="Bgee" id="ENSG00000204287">
    <property type="expression patterns" value="Expressed in monocyte and 99 other cell types or tissues"/>
</dbReference>
<dbReference type="ExpressionAtlas" id="P01903">
    <property type="expression patterns" value="baseline and differential"/>
</dbReference>
<dbReference type="GO" id="GO:0120281">
    <property type="term" value="C:autolysosome membrane"/>
    <property type="evidence" value="ECO:0007669"/>
    <property type="project" value="UniProtKB-SubCell"/>
</dbReference>
<dbReference type="GO" id="GO:0009986">
    <property type="term" value="C:cell surface"/>
    <property type="evidence" value="ECO:0000314"/>
    <property type="project" value="UniProtKB"/>
</dbReference>
<dbReference type="GO" id="GO:0030669">
    <property type="term" value="C:clathrin-coated endocytic vesicle membrane"/>
    <property type="evidence" value="ECO:0000304"/>
    <property type="project" value="Reactome"/>
</dbReference>
<dbReference type="GO" id="GO:0031901">
    <property type="term" value="C:early endosome membrane"/>
    <property type="evidence" value="ECO:0007669"/>
    <property type="project" value="UniProtKB-SubCell"/>
</dbReference>
<dbReference type="GO" id="GO:0030666">
    <property type="term" value="C:endocytic vesicle membrane"/>
    <property type="evidence" value="ECO:0000304"/>
    <property type="project" value="Reactome"/>
</dbReference>
<dbReference type="GO" id="GO:0012507">
    <property type="term" value="C:ER to Golgi transport vesicle membrane"/>
    <property type="evidence" value="ECO:0000304"/>
    <property type="project" value="Reactome"/>
</dbReference>
<dbReference type="GO" id="GO:0070062">
    <property type="term" value="C:extracellular exosome"/>
    <property type="evidence" value="ECO:0007005"/>
    <property type="project" value="UniProtKB"/>
</dbReference>
<dbReference type="GO" id="GO:0000139">
    <property type="term" value="C:Golgi membrane"/>
    <property type="evidence" value="ECO:0000304"/>
    <property type="project" value="Reactome"/>
</dbReference>
<dbReference type="GO" id="GO:0001772">
    <property type="term" value="C:immunological synapse"/>
    <property type="evidence" value="ECO:0000314"/>
    <property type="project" value="UniProtKB"/>
</dbReference>
<dbReference type="GO" id="GO:0031902">
    <property type="term" value="C:late endosome membrane"/>
    <property type="evidence" value="ECO:0000314"/>
    <property type="project" value="UniProtKB"/>
</dbReference>
<dbReference type="GO" id="GO:0098553">
    <property type="term" value="C:lumenal side of endoplasmic reticulum membrane"/>
    <property type="evidence" value="ECO:0000304"/>
    <property type="project" value="Reactome"/>
</dbReference>
<dbReference type="GO" id="GO:0005765">
    <property type="term" value="C:lysosomal membrane"/>
    <property type="evidence" value="ECO:0000314"/>
    <property type="project" value="UniProtKB"/>
</dbReference>
<dbReference type="GO" id="GO:0005764">
    <property type="term" value="C:lysosome"/>
    <property type="evidence" value="ECO:0000314"/>
    <property type="project" value="MGI"/>
</dbReference>
<dbReference type="GO" id="GO:0042613">
    <property type="term" value="C:MHC class II protein complex"/>
    <property type="evidence" value="ECO:0000314"/>
    <property type="project" value="UniProtKB"/>
</dbReference>
<dbReference type="GO" id="GO:0005886">
    <property type="term" value="C:plasma membrane"/>
    <property type="evidence" value="ECO:0000314"/>
    <property type="project" value="MGI"/>
</dbReference>
<dbReference type="GO" id="GO:0032588">
    <property type="term" value="C:trans-Golgi network membrane"/>
    <property type="evidence" value="ECO:0000304"/>
    <property type="project" value="Reactome"/>
</dbReference>
<dbReference type="GO" id="GO:0030658">
    <property type="term" value="C:transport vesicle membrane"/>
    <property type="evidence" value="ECO:0000304"/>
    <property type="project" value="Reactome"/>
</dbReference>
<dbReference type="GO" id="GO:0023026">
    <property type="term" value="F:MHC class II protein complex binding"/>
    <property type="evidence" value="ECO:0007005"/>
    <property type="project" value="UniProtKB"/>
</dbReference>
<dbReference type="GO" id="GO:0032395">
    <property type="term" value="F:MHC class II receptor activity"/>
    <property type="evidence" value="ECO:0000303"/>
    <property type="project" value="UniProtKB"/>
</dbReference>
<dbReference type="GO" id="GO:0042605">
    <property type="term" value="F:peptide antigen binding"/>
    <property type="evidence" value="ECO:0000314"/>
    <property type="project" value="UniProtKB"/>
</dbReference>
<dbReference type="GO" id="GO:0030247">
    <property type="term" value="F:polysaccharide binding"/>
    <property type="evidence" value="ECO:0000314"/>
    <property type="project" value="UniProtKB"/>
</dbReference>
<dbReference type="GO" id="GO:0042608">
    <property type="term" value="F:T cell receptor binding"/>
    <property type="evidence" value="ECO:0000314"/>
    <property type="project" value="UniProtKB"/>
</dbReference>
<dbReference type="GO" id="GO:0002250">
    <property type="term" value="P:adaptive immune response"/>
    <property type="evidence" value="ECO:0007669"/>
    <property type="project" value="UniProtKB-KW"/>
</dbReference>
<dbReference type="GO" id="GO:0002491">
    <property type="term" value="P:antigen processing and presentation of endogenous peptide antigen via MHC class II"/>
    <property type="evidence" value="ECO:0000314"/>
    <property type="project" value="UniProtKB"/>
</dbReference>
<dbReference type="GO" id="GO:0019886">
    <property type="term" value="P:antigen processing and presentation of exogenous peptide antigen via MHC class II"/>
    <property type="evidence" value="ECO:0000314"/>
    <property type="project" value="UniProtKB"/>
</dbReference>
<dbReference type="GO" id="GO:0002504">
    <property type="term" value="P:antigen processing and presentation of peptide or polysaccharide antigen via MHC class II"/>
    <property type="evidence" value="ECO:0000314"/>
    <property type="project" value="UniProtKB"/>
</dbReference>
<dbReference type="GO" id="GO:0050890">
    <property type="term" value="P:cognition"/>
    <property type="evidence" value="ECO:0000315"/>
    <property type="project" value="UniProtKB"/>
</dbReference>
<dbReference type="GO" id="GO:0006955">
    <property type="term" value="P:immune response"/>
    <property type="evidence" value="ECO:0000303"/>
    <property type="project" value="UniProtKB"/>
</dbReference>
<dbReference type="GO" id="GO:0002469">
    <property type="term" value="P:myeloid dendritic cell antigen processing and presentation"/>
    <property type="evidence" value="ECO:0000314"/>
    <property type="project" value="UniProtKB"/>
</dbReference>
<dbReference type="GO" id="GO:0002503">
    <property type="term" value="P:peptide antigen assembly with MHC class II protein complex"/>
    <property type="evidence" value="ECO:0000314"/>
    <property type="project" value="UniProtKB"/>
</dbReference>
<dbReference type="GO" id="GO:2000516">
    <property type="term" value="P:positive regulation of CD4-positive, alpha-beta T cell activation"/>
    <property type="evidence" value="ECO:0000314"/>
    <property type="project" value="UniProtKB"/>
</dbReference>
<dbReference type="GO" id="GO:0032831">
    <property type="term" value="P:positive regulation of CD4-positive, CD25-positive, alpha-beta regulatory T cell differentiation"/>
    <property type="evidence" value="ECO:0000314"/>
    <property type="project" value="UniProtKB"/>
</dbReference>
<dbReference type="GO" id="GO:0050778">
    <property type="term" value="P:positive regulation of immune response"/>
    <property type="evidence" value="ECO:0000318"/>
    <property type="project" value="GO_Central"/>
</dbReference>
<dbReference type="GO" id="GO:0043382">
    <property type="term" value="P:positive regulation of memory T cell differentiation"/>
    <property type="evidence" value="ECO:0000314"/>
    <property type="project" value="UniProtKB"/>
</dbReference>
<dbReference type="GO" id="GO:0050870">
    <property type="term" value="P:positive regulation of T cell activation"/>
    <property type="evidence" value="ECO:0000318"/>
    <property type="project" value="GO_Central"/>
</dbReference>
<dbReference type="GO" id="GO:0001916">
    <property type="term" value="P:positive regulation of T cell mediated cytotoxicity"/>
    <property type="evidence" value="ECO:0000314"/>
    <property type="project" value="UniProtKB"/>
</dbReference>
<dbReference type="GO" id="GO:0045622">
    <property type="term" value="P:regulation of T-helper cell differentiation"/>
    <property type="evidence" value="ECO:0000314"/>
    <property type="project" value="UniProtKB"/>
</dbReference>
<dbReference type="CDD" id="cd21007">
    <property type="entry name" value="IgC1_MHC_II_alpha_HLA-DR"/>
    <property type="match status" value="1"/>
</dbReference>
<dbReference type="FunFam" id="2.60.40.10:FF:000280">
    <property type="entry name" value="HLA class II histocompatibility antigen, DR alpha chain"/>
    <property type="match status" value="1"/>
</dbReference>
<dbReference type="FunFam" id="3.10.320.10:FF:000002">
    <property type="entry name" value="HLA class II histocompatibility antigen, DR alpha chain"/>
    <property type="match status" value="1"/>
</dbReference>
<dbReference type="Gene3D" id="3.10.320.10">
    <property type="entry name" value="Class II Histocompatibility Antigen, M Beta Chain, Chain B, domain 1"/>
    <property type="match status" value="1"/>
</dbReference>
<dbReference type="Gene3D" id="2.60.40.10">
    <property type="entry name" value="Immunoglobulins"/>
    <property type="match status" value="1"/>
</dbReference>
<dbReference type="InterPro" id="IPR007110">
    <property type="entry name" value="Ig-like_dom"/>
</dbReference>
<dbReference type="InterPro" id="IPR036179">
    <property type="entry name" value="Ig-like_dom_sf"/>
</dbReference>
<dbReference type="InterPro" id="IPR013783">
    <property type="entry name" value="Ig-like_fold"/>
</dbReference>
<dbReference type="InterPro" id="IPR003006">
    <property type="entry name" value="Ig/MHC_CS"/>
</dbReference>
<dbReference type="InterPro" id="IPR003597">
    <property type="entry name" value="Ig_C1-set"/>
</dbReference>
<dbReference type="InterPro" id="IPR050160">
    <property type="entry name" value="MHC/Immunoglobulin"/>
</dbReference>
<dbReference type="InterPro" id="IPR011162">
    <property type="entry name" value="MHC_I/II-like_Ag-recog"/>
</dbReference>
<dbReference type="InterPro" id="IPR014745">
    <property type="entry name" value="MHC_II_a/b_N"/>
</dbReference>
<dbReference type="InterPro" id="IPR001003">
    <property type="entry name" value="MHC_II_a_N"/>
</dbReference>
<dbReference type="PANTHER" id="PTHR19944:SF86">
    <property type="entry name" value="HLA CLASS II HISTOCOMPATIBILITY ANTIGEN, DR ALPHA CHAIN"/>
    <property type="match status" value="1"/>
</dbReference>
<dbReference type="PANTHER" id="PTHR19944">
    <property type="entry name" value="MHC CLASS II-RELATED"/>
    <property type="match status" value="1"/>
</dbReference>
<dbReference type="Pfam" id="PF07654">
    <property type="entry name" value="C1-set"/>
    <property type="match status" value="1"/>
</dbReference>
<dbReference type="Pfam" id="PF00993">
    <property type="entry name" value="MHC_II_alpha"/>
    <property type="match status" value="1"/>
</dbReference>
<dbReference type="SMART" id="SM00407">
    <property type="entry name" value="IGc1"/>
    <property type="match status" value="1"/>
</dbReference>
<dbReference type="SMART" id="SM00920">
    <property type="entry name" value="MHC_II_alpha"/>
    <property type="match status" value="1"/>
</dbReference>
<dbReference type="SUPFAM" id="SSF48726">
    <property type="entry name" value="Immunoglobulin"/>
    <property type="match status" value="1"/>
</dbReference>
<dbReference type="SUPFAM" id="SSF54452">
    <property type="entry name" value="MHC antigen-recognition domain"/>
    <property type="match status" value="1"/>
</dbReference>
<dbReference type="PROSITE" id="PS50835">
    <property type="entry name" value="IG_LIKE"/>
    <property type="match status" value="1"/>
</dbReference>
<dbReference type="PROSITE" id="PS00290">
    <property type="entry name" value="IG_MHC"/>
    <property type="match status" value="1"/>
</dbReference>
<gene>
    <name type="primary">HLA-DRA</name>
    <name type="synonym">HLA-DRA1</name>
</gene>
<protein>
    <recommendedName>
        <fullName>HLA class II histocompatibility antigen, DR alpha chain</fullName>
    </recommendedName>
    <alternativeName>
        <fullName>MHC class II antigen DRA</fullName>
    </alternativeName>
</protein>
<feature type="signal peptide" evidence="34 35 36">
    <location>
        <begin position="1"/>
        <end position="25"/>
    </location>
</feature>
<feature type="chain" id="PRO_0000018947" description="HLA class II histocompatibility antigen, DR alpha chain">
    <location>
        <begin position="26"/>
        <end position="254"/>
    </location>
</feature>
<feature type="topological domain" description="Extracellular" evidence="1">
    <location>
        <begin position="26"/>
        <end position="216"/>
    </location>
</feature>
<feature type="transmembrane region" description="Helical" evidence="1">
    <location>
        <begin position="217"/>
        <end position="239"/>
    </location>
</feature>
<feature type="topological domain" description="Cytoplasmic" evidence="1">
    <location>
        <begin position="240"/>
        <end position="254"/>
    </location>
</feature>
<feature type="domain" description="Ig-like C1-type">
    <location>
        <begin position="112"/>
        <end position="204"/>
    </location>
</feature>
<feature type="region of interest" description="Alpha-1">
    <location>
        <begin position="26"/>
        <end position="109"/>
    </location>
</feature>
<feature type="region of interest" description="Alpha-2">
    <location>
        <begin position="110"/>
        <end position="203"/>
    </location>
</feature>
<feature type="region of interest" description="Connecting peptide">
    <location>
        <begin position="204"/>
        <end position="216"/>
    </location>
</feature>
<feature type="site" description="Self- and pathogen-derived peptide antigen" evidence="14 20 23 39 53">
    <location>
        <position position="34"/>
    </location>
</feature>
<feature type="site" description="Self-peptide antigen" evidence="32">
    <location>
        <position position="74"/>
    </location>
</feature>
<feature type="site" description="Self- and pathogen-derived peptide antigen" evidence="20 39">
    <location>
        <position position="76"/>
    </location>
</feature>
<feature type="site" description="Self-peptide antigen" evidence="32">
    <location>
        <position position="77"/>
    </location>
</feature>
<feature type="site" description="Self- and pathogen-derived peptide antigen" evidence="14 20 32 39">
    <location>
        <position position="78"/>
    </location>
</feature>
<feature type="site" description="Pathogen-derived peptide antigen" evidence="23 53">
    <location>
        <position position="80"/>
    </location>
</feature>
<feature type="site" description="Self- and pathogen-derived peptide antigen" evidence="14 20 23 32 39 53">
    <location>
        <position position="87"/>
    </location>
</feature>
<feature type="site" description="Pathogen-derived peptide antigen" evidence="14 20 23 39 52 53">
    <location>
        <position position="94"/>
    </location>
</feature>
<feature type="site" description="Self- and pathogen-derived peptide antigen" evidence="14 23 32 39 52 53">
    <location>
        <position position="101"/>
    </location>
</feature>
<feature type="glycosylation site" description="N-linked (GlcNAc...) asparagine" evidence="18 37">
    <location>
        <position position="103"/>
    </location>
</feature>
<feature type="glycosylation site" description="N-linked (GlcNAc...) asparagine" evidence="18 37">
    <location>
        <position position="143"/>
    </location>
</feature>
<feature type="disulfide bond" evidence="2 5 8 11 14 32 37">
    <location>
        <begin position="132"/>
        <end position="188"/>
    </location>
</feature>
<feature type="cross-link" description="Glycyl lysine isopeptide (Lys-Gly) (interchain with G-Cter in ubiquitin)" evidence="17">
    <location>
        <position position="244"/>
    </location>
</feature>
<feature type="sequence variant" id="VAR_035241" description="In dbSNP:rs16822586.">
    <original>V</original>
    <variation>L</variation>
    <location>
        <position position="16"/>
    </location>
</feature>
<feature type="sequence variant" id="VAR_004399" description="In allele DRA*01:01; dbSNP:rs7192.">
    <original>L</original>
    <variation>V</variation>
    <location>
        <position position="242"/>
    </location>
</feature>
<feature type="mutagenesis site" description="Impairs the interaction with HLA-DM complex, CLIP dissociation and peptide exchange." evidence="3 23">
    <original>E</original>
    <variation>K</variation>
    <location>
        <position position="65"/>
    </location>
</feature>
<feature type="mutagenesis site" description="Decreases the interaction with HLA-DM complex and peptide exchange." evidence="23">
    <original>W</original>
    <variation>F</variation>
    <location>
        <position position="68"/>
    </location>
</feature>
<feature type="mutagenesis site" description="Increases the interaction with HLA-DM complex and peptide exchange." evidence="23">
    <original>G</original>
    <variation>S</variation>
    <location>
        <position position="74"/>
    </location>
</feature>
<feature type="mutagenesis site" description="Impairs the interaction with HLA-DM complex, CLIP dissociation and peptide exchange." evidence="3 23">
    <original>F</original>
    <variation>A</variation>
    <variation>S</variation>
    <variation>V</variation>
    <variation>L</variation>
    <location>
        <position position="76"/>
    </location>
</feature>
<feature type="mutagenesis site" description="Increases the interaction with HLA-DM complex and peptide exchange." evidence="23">
    <original>F</original>
    <variation>W</variation>
    <location>
        <position position="76"/>
    </location>
</feature>
<feature type="mutagenesis site" description="Decreases the interaction with HLA-DM complex and peptide exchange." evidence="23">
    <original>S</original>
    <variation>D</variation>
    <variation>H</variation>
    <location>
        <position position="78"/>
    </location>
</feature>
<feature type="mutagenesis site" description="Increases the interaction with HLA-DM complex and peptide exchange." evidence="23">
    <original>F</original>
    <variation>A</variation>
    <variation>C</variation>
    <location>
        <position position="79"/>
    </location>
</feature>
<feature type="mutagenesis site" description="Increases the interaction with HLA-DM complex and peptide exchange. Decreases the affinity of the interaction with TCR by more than five-fold." evidence="23 30">
    <original>E</original>
    <variation>A</variation>
    <location>
        <position position="80"/>
    </location>
</feature>
<feature type="mutagenesis site" description="Decreases the interaction with HLA-DM complex and peptide exchange." evidence="23">
    <original>Q</original>
    <variation>A</variation>
    <location>
        <position position="82"/>
    </location>
</feature>
<feature type="mutagenesis site" description="Decreases the affinity of the interaction with TCR by more than five-fold." evidence="30">
    <original>A</original>
    <variation>L</variation>
    <location>
        <position position="93"/>
    </location>
</feature>
<feature type="mutagenesis site" description="Decreases the interaction with CD4." evidence="28">
    <original>T</original>
    <variation>R</variation>
    <location>
        <position position="115"/>
    </location>
</feature>
<feature type="mutagenesis site" description="Decreases the interaction with CD4." evidence="28">
    <original>L</original>
    <variation>R</variation>
    <location>
        <position position="117"/>
    </location>
</feature>
<feature type="mutagenesis site" description="Decreases the interaction with HLA-DM complex and peptide exchange." evidence="23">
    <original>P</original>
    <variation>S</variation>
    <location>
        <position position="121"/>
    </location>
</feature>
<feature type="mutagenesis site" description="Impairs the interaction with HLA-DM complex and peptide exchange." evidence="23">
    <original>R</original>
    <variation>A</variation>
    <location>
        <position position="125"/>
    </location>
</feature>
<feature type="mutagenesis site" description="Almost no change in down-regulation of MHCII. No ubiquitination and complete loss of down-regulation of MHCII; when associated with 'R-254' of HLA-DRB." evidence="17">
    <original>K</original>
    <variation>R</variation>
    <location>
        <position position="244"/>
    </location>
</feature>
<feature type="sequence conflict" description="In Ref. 10; AA sequence." evidence="44" ref="10">
    <original>EE</original>
    <variation>AD</variation>
    <location>
        <begin position="28"/>
        <end position="29"/>
    </location>
</feature>
<feature type="sequence conflict" description="In Ref. 10; AA sequence." evidence="44" ref="10">
    <original>I</original>
    <variation>T</variation>
    <location>
        <position position="33"/>
    </location>
</feature>
<feature type="sequence conflict" description="In Ref. 10; AA sequence." evidence="44" ref="10">
    <original>QA</original>
    <variation>YP</variation>
    <location>
        <begin position="34"/>
        <end position="35"/>
    </location>
</feature>
<feature type="sequence conflict" description="In Ref. 10; AA sequence." evidence="44" ref="10">
    <original>M</original>
    <variation>Q</variation>
    <location>
        <position position="48"/>
    </location>
</feature>
<feature type="sequence conflict" description="In Ref. 10; AA sequence." evidence="44" ref="10">
    <original>D</original>
    <variation>T</variation>
    <location>
        <position position="54"/>
    </location>
</feature>
<feature type="sequence conflict" description="In Ref. 15; AA sequence." evidence="44" ref="15">
    <original>V</original>
    <variation>Y</variation>
    <location>
        <position position="59"/>
    </location>
</feature>
<feature type="sequence conflict" description="In Ref. 15; AA sequence." evidence="44" ref="15">
    <original>K</original>
    <variation>L</variation>
    <location>
        <position position="64"/>
    </location>
</feature>
<feature type="sequence conflict" description="In Ref. 14; AA sequence." evidence="44" ref="14">
    <original>V</original>
    <variation>A</variation>
    <location>
        <position position="67"/>
    </location>
</feature>
<feature type="sequence conflict" description="In Ref. 15; AA sequence." evidence="44" ref="15">
    <original>R</original>
    <variation>L</variation>
    <location>
        <position position="69"/>
    </location>
</feature>
<feature type="sequence conflict" description="In Ref. 15; AA sequence." evidence="44" ref="15">
    <original>R</original>
    <variation>P</variation>
    <location>
        <position position="75"/>
    </location>
</feature>
<feature type="sequence conflict" description="In Ref. 15; AA sequence." evidence="44" ref="15">
    <original>S</original>
    <variation>D</variation>
    <location>
        <position position="78"/>
    </location>
</feature>
<feature type="sequence conflict" description="In Ref. 14; AA sequence." evidence="44" ref="14">
    <original>N</original>
    <variation>E</variation>
    <location>
        <position position="149"/>
    </location>
</feature>
<feature type="strand" evidence="60">
    <location>
        <begin position="29"/>
        <end position="40"/>
    </location>
</feature>
<feature type="turn" evidence="60">
    <location>
        <begin position="41"/>
        <end position="43"/>
    </location>
</feature>
<feature type="strand" evidence="60">
    <location>
        <begin position="44"/>
        <end position="51"/>
    </location>
</feature>
<feature type="strand" evidence="60">
    <location>
        <begin position="54"/>
        <end position="60"/>
    </location>
</feature>
<feature type="turn" evidence="60">
    <location>
        <begin position="61"/>
        <end position="64"/>
    </location>
</feature>
<feature type="strand" evidence="60">
    <location>
        <begin position="65"/>
        <end position="70"/>
    </location>
</feature>
<feature type="helix" evidence="60">
    <location>
        <begin position="71"/>
        <end position="74"/>
    </location>
</feature>
<feature type="helix" evidence="60">
    <location>
        <begin position="82"/>
        <end position="101"/>
    </location>
</feature>
<feature type="turn" evidence="57">
    <location>
        <begin position="102"/>
        <end position="104"/>
    </location>
</feature>
<feature type="strand" evidence="60">
    <location>
        <begin position="113"/>
        <end position="120"/>
    </location>
</feature>
<feature type="strand" evidence="58">
    <location>
        <begin position="124"/>
        <end position="126"/>
    </location>
</feature>
<feature type="strand" evidence="60">
    <location>
        <begin position="128"/>
        <end position="140"/>
    </location>
</feature>
<feature type="strand" evidence="60">
    <location>
        <begin position="143"/>
        <end position="148"/>
    </location>
</feature>
<feature type="strand" evidence="59">
    <location>
        <begin position="151"/>
        <end position="153"/>
    </location>
</feature>
<feature type="strand" evidence="56">
    <location>
        <begin position="155"/>
        <end position="159"/>
    </location>
</feature>
<feature type="strand" evidence="61">
    <location>
        <begin position="166"/>
        <end position="168"/>
    </location>
</feature>
<feature type="strand" evidence="60">
    <location>
        <begin position="170"/>
        <end position="178"/>
    </location>
</feature>
<feature type="strand" evidence="60">
    <location>
        <begin position="186"/>
        <end position="191"/>
    </location>
</feature>
<feature type="strand" evidence="62">
    <location>
        <begin position="195"/>
        <end position="197"/>
    </location>
</feature>
<feature type="strand" evidence="60">
    <location>
        <begin position="199"/>
        <end position="203"/>
    </location>
</feature>
<name>DRA_HUMAN</name>
<evidence type="ECO:0000255" key="1"/>
<evidence type="ECO:0000255" key="2">
    <source>
        <dbReference type="PROSITE-ProRule" id="PRU00114"/>
    </source>
</evidence>
<evidence type="ECO:0000269" key="3">
    <source>
    </source>
</evidence>
<evidence type="ECO:0000269" key="4">
    <source>
    </source>
</evidence>
<evidence type="ECO:0000269" key="5">
    <source>
    </source>
</evidence>
<evidence type="ECO:0000269" key="6">
    <source>
    </source>
</evidence>
<evidence type="ECO:0000269" key="7">
    <source>
    </source>
</evidence>
<evidence type="ECO:0000269" key="8">
    <source>
    </source>
</evidence>
<evidence type="ECO:0000269" key="9">
    <source>
    </source>
</evidence>
<evidence type="ECO:0000269" key="10">
    <source>
    </source>
</evidence>
<evidence type="ECO:0000269" key="11">
    <source>
    </source>
</evidence>
<evidence type="ECO:0000269" key="12">
    <source>
    </source>
</evidence>
<evidence type="ECO:0000269" key="13">
    <source>
    </source>
</evidence>
<evidence type="ECO:0000269" key="14">
    <source>
    </source>
</evidence>
<evidence type="ECO:0000269" key="15">
    <source>
    </source>
</evidence>
<evidence type="ECO:0000269" key="16">
    <source>
    </source>
</evidence>
<evidence type="ECO:0000269" key="17">
    <source>
    </source>
</evidence>
<evidence type="ECO:0000269" key="18">
    <source>
    </source>
</evidence>
<evidence type="ECO:0000269" key="19">
    <source>
    </source>
</evidence>
<evidence type="ECO:0000269" key="20">
    <source>
    </source>
</evidence>
<evidence type="ECO:0000269" key="21">
    <source>
    </source>
</evidence>
<evidence type="ECO:0000269" key="22">
    <source>
    </source>
</evidence>
<evidence type="ECO:0000269" key="23">
    <source>
    </source>
</evidence>
<evidence type="ECO:0000269" key="24">
    <source>
    </source>
</evidence>
<evidence type="ECO:0000269" key="25">
    <source>
    </source>
</evidence>
<evidence type="ECO:0000269" key="26">
    <source>
    </source>
</evidence>
<evidence type="ECO:0000269" key="27">
    <source>
    </source>
</evidence>
<evidence type="ECO:0000269" key="28">
    <source>
    </source>
</evidence>
<evidence type="ECO:0000269" key="29">
    <source>
    </source>
</evidence>
<evidence type="ECO:0000269" key="30">
    <source>
    </source>
</evidence>
<evidence type="ECO:0000269" key="31">
    <source>
    </source>
</evidence>
<evidence type="ECO:0000269" key="32">
    <source>
    </source>
</evidence>
<evidence type="ECO:0000269" key="33">
    <source>
    </source>
</evidence>
<evidence type="ECO:0000269" key="34">
    <source>
    </source>
</evidence>
<evidence type="ECO:0000269" key="35">
    <source>
    </source>
</evidence>
<evidence type="ECO:0000269" key="36">
    <source>
    </source>
</evidence>
<evidence type="ECO:0000269" key="37">
    <source>
    </source>
</evidence>
<evidence type="ECO:0000269" key="38">
    <source>
    </source>
</evidence>
<evidence type="ECO:0000269" key="39">
    <source>
    </source>
</evidence>
<evidence type="ECO:0000269" key="40">
    <source>
    </source>
</evidence>
<evidence type="ECO:0000269" key="41">
    <source>
    </source>
</evidence>
<evidence type="ECO:0000269" key="42">
    <source>
    </source>
</evidence>
<evidence type="ECO:0000269" key="43">
    <source>
    </source>
</evidence>
<evidence type="ECO:0000305" key="44"/>
<evidence type="ECO:0007744" key="45">
    <source>
        <dbReference type="PDB" id="1BX2"/>
    </source>
</evidence>
<evidence type="ECO:0007744" key="46">
    <source>
        <dbReference type="PDB" id="1DLH"/>
    </source>
</evidence>
<evidence type="ECO:0007744" key="47">
    <source>
        <dbReference type="PDB" id="1FV1"/>
    </source>
</evidence>
<evidence type="ECO:0007744" key="48">
    <source>
        <dbReference type="PDB" id="1HQR"/>
    </source>
</evidence>
<evidence type="ECO:0007744" key="49">
    <source>
        <dbReference type="PDB" id="1HXY"/>
    </source>
</evidence>
<evidence type="ECO:0007744" key="50">
    <source>
        <dbReference type="PDB" id="1SEB"/>
    </source>
</evidence>
<evidence type="ECO:0007744" key="51">
    <source>
        <dbReference type="PDB" id="2SEB"/>
    </source>
</evidence>
<evidence type="ECO:0007744" key="52">
    <source>
        <dbReference type="PDB" id="4FQX"/>
    </source>
</evidence>
<evidence type="ECO:0007744" key="53">
    <source>
        <dbReference type="PDB" id="4GBX"/>
    </source>
</evidence>
<evidence type="ECO:0007744" key="54">
    <source>
        <dbReference type="PDB" id="6BIV"/>
    </source>
</evidence>
<evidence type="ECO:0007744" key="55">
    <source>
        <dbReference type="PDB" id="6BIX"/>
    </source>
</evidence>
<evidence type="ECO:0007829" key="56">
    <source>
        <dbReference type="PDB" id="2FSE"/>
    </source>
</evidence>
<evidence type="ECO:0007829" key="57">
    <source>
        <dbReference type="PDB" id="3C5J"/>
    </source>
</evidence>
<evidence type="ECO:0007829" key="58">
    <source>
        <dbReference type="PDB" id="3S4S"/>
    </source>
</evidence>
<evidence type="ECO:0007829" key="59">
    <source>
        <dbReference type="PDB" id="4X5W"/>
    </source>
</evidence>
<evidence type="ECO:0007829" key="60">
    <source>
        <dbReference type="PDB" id="5NI9"/>
    </source>
</evidence>
<evidence type="ECO:0007829" key="61">
    <source>
        <dbReference type="PDB" id="6CPN"/>
    </source>
</evidence>
<evidence type="ECO:0007829" key="62">
    <source>
        <dbReference type="PDB" id="7YX9"/>
    </source>
</evidence>
<reference key="1">
    <citation type="journal article" date="1982" name="Nature">
        <title>Sequence of an HLA-DR alpha-chain cDNA clone and intron-exon organization of the corresponding gene.</title>
        <authorList>
            <person name="Lee J.S."/>
            <person name="Trowsdale J."/>
            <person name="Travers P.J."/>
            <person name="Carey J."/>
            <person name="Grosveld F."/>
            <person name="Jenkins J."/>
            <person name="Bodmer W.F."/>
        </authorList>
    </citation>
    <scope>NUCLEOTIDE SEQUENCE [MRNA] (ALLELE DRA*01:01)</scope>
</reference>
<reference key="2">
    <citation type="journal article" date="1983" name="DNA">
        <title>Cloning the heavy chain of human HLA-DR antigen using synthetic oligodeoxyribonucleotides as hybridization probes.</title>
        <authorList>
            <person name="Kajimura Y."/>
            <person name="Toyoda H."/>
            <person name="Sato M."/>
            <person name="Miyakoshi S."/>
            <person name="Kaplan S.A."/>
            <person name="Ike Y."/>
            <person name="Goyert S.M."/>
            <person name="Silver J."/>
            <person name="Hawke D."/>
            <person name="Shively J.E."/>
            <person name="Suggs S.V."/>
            <person name="Wallace R.B."/>
            <person name="Itakura K."/>
        </authorList>
    </citation>
    <scope>NUCLEOTIDE SEQUENCE [MRNA] (ALLELE DRA*01:01)</scope>
</reference>
<reference key="3">
    <citation type="journal article" date="1990" name="J. Immunol.">
        <title>Rapid nonlysosomal degradation of assembled HLA class II glycoproteins incorporating a mutant DR alpha-chain.</title>
        <authorList>
            <person name="Koppelman B."/>
            <person name="Cresswell P."/>
        </authorList>
    </citation>
    <scope>NUCLEOTIDE SEQUENCE [MRNA] (ALLELE DRA*01:02)</scope>
</reference>
<reference key="4">
    <citation type="journal article" date="1983" name="Nucleic Acids Res.">
        <title>Organization of the transcriptional unit of a human class II histocompatibility antigen: HLA-DR heavy chain.</title>
        <authorList>
            <person name="Schamboeck A."/>
            <person name="Korman A.J."/>
            <person name="Kamb A."/>
            <person name="Strominger J.L."/>
        </authorList>
    </citation>
    <scope>NUCLEOTIDE SEQUENCE [GENOMIC DNA] (ALLELE DRA*01:02)</scope>
</reference>
<reference key="5">
    <citation type="journal article" date="1983" name="Proc. Natl. Acad. Sci. U.S.A.">
        <title>Structure and nucleotide sequence of the heavy chain gene of HLA-DR.</title>
        <authorList>
            <person name="Das H.K."/>
            <person name="Lawrance S.K."/>
            <person name="Weissman S.M."/>
        </authorList>
    </citation>
    <scope>NUCLEOTIDE SEQUENCE [GENOMIC DNA] (ALLELE DRA*01:01)</scope>
</reference>
<reference key="6">
    <citation type="journal article" date="1983" name="Proc. Natl. Acad. Sci. U.S.A.">
        <authorList>
            <person name="Das H.K."/>
            <person name="Lawrance S.K."/>
            <person name="Weissman S.M."/>
        </authorList>
    </citation>
    <scope>ERRATUM OF PUBMED:6304715</scope>
    <scope>SEQUENCE REVISION</scope>
</reference>
<reference key="7">
    <citation type="submission" date="2004-06" db="EMBL/GenBank/DDBJ databases">
        <title>Cloning of human full open reading frames in Gateway(TM) system entry vector (pDONR201).</title>
        <authorList>
            <person name="Ebert L."/>
            <person name="Schick M."/>
            <person name="Neubert P."/>
            <person name="Schatten R."/>
            <person name="Henze S."/>
            <person name="Korn B."/>
        </authorList>
    </citation>
    <scope>NUCLEOTIDE SEQUENCE [LARGE SCALE MRNA] (ALLELE DRA*01:01)</scope>
</reference>
<reference key="8">
    <citation type="journal article" date="2003" name="Nature">
        <title>The DNA sequence and analysis of human chromosome 6.</title>
        <authorList>
            <person name="Mungall A.J."/>
            <person name="Palmer S.A."/>
            <person name="Sims S.K."/>
            <person name="Edwards C.A."/>
            <person name="Ashurst J.L."/>
            <person name="Wilming L."/>
            <person name="Jones M.C."/>
            <person name="Horton R."/>
            <person name="Hunt S.E."/>
            <person name="Scott C.E."/>
            <person name="Gilbert J.G.R."/>
            <person name="Clamp M.E."/>
            <person name="Bethel G."/>
            <person name="Milne S."/>
            <person name="Ainscough R."/>
            <person name="Almeida J.P."/>
            <person name="Ambrose K.D."/>
            <person name="Andrews T.D."/>
            <person name="Ashwell R.I.S."/>
            <person name="Babbage A.K."/>
            <person name="Bagguley C.L."/>
            <person name="Bailey J."/>
            <person name="Banerjee R."/>
            <person name="Barker D.J."/>
            <person name="Barlow K.F."/>
            <person name="Bates K."/>
            <person name="Beare D.M."/>
            <person name="Beasley H."/>
            <person name="Beasley O."/>
            <person name="Bird C.P."/>
            <person name="Blakey S.E."/>
            <person name="Bray-Allen S."/>
            <person name="Brook J."/>
            <person name="Brown A.J."/>
            <person name="Brown J.Y."/>
            <person name="Burford D.C."/>
            <person name="Burrill W."/>
            <person name="Burton J."/>
            <person name="Carder C."/>
            <person name="Carter N.P."/>
            <person name="Chapman J.C."/>
            <person name="Clark S.Y."/>
            <person name="Clark G."/>
            <person name="Clee C.M."/>
            <person name="Clegg S."/>
            <person name="Cobley V."/>
            <person name="Collier R.E."/>
            <person name="Collins J.E."/>
            <person name="Colman L.K."/>
            <person name="Corby N.R."/>
            <person name="Coville G.J."/>
            <person name="Culley K.M."/>
            <person name="Dhami P."/>
            <person name="Davies J."/>
            <person name="Dunn M."/>
            <person name="Earthrowl M.E."/>
            <person name="Ellington A.E."/>
            <person name="Evans K.A."/>
            <person name="Faulkner L."/>
            <person name="Francis M.D."/>
            <person name="Frankish A."/>
            <person name="Frankland J."/>
            <person name="French L."/>
            <person name="Garner P."/>
            <person name="Garnett J."/>
            <person name="Ghori M.J."/>
            <person name="Gilby L.M."/>
            <person name="Gillson C.J."/>
            <person name="Glithero R.J."/>
            <person name="Grafham D.V."/>
            <person name="Grant M."/>
            <person name="Gribble S."/>
            <person name="Griffiths C."/>
            <person name="Griffiths M.N.D."/>
            <person name="Hall R."/>
            <person name="Halls K.S."/>
            <person name="Hammond S."/>
            <person name="Harley J.L."/>
            <person name="Hart E.A."/>
            <person name="Heath P.D."/>
            <person name="Heathcott R."/>
            <person name="Holmes S.J."/>
            <person name="Howden P.J."/>
            <person name="Howe K.L."/>
            <person name="Howell G.R."/>
            <person name="Huckle E."/>
            <person name="Humphray S.J."/>
            <person name="Humphries M.D."/>
            <person name="Hunt A.R."/>
            <person name="Johnson C.M."/>
            <person name="Joy A.A."/>
            <person name="Kay M."/>
            <person name="Keenan S.J."/>
            <person name="Kimberley A.M."/>
            <person name="King A."/>
            <person name="Laird G.K."/>
            <person name="Langford C."/>
            <person name="Lawlor S."/>
            <person name="Leongamornlert D.A."/>
            <person name="Leversha M."/>
            <person name="Lloyd C.R."/>
            <person name="Lloyd D.M."/>
            <person name="Loveland J.E."/>
            <person name="Lovell J."/>
            <person name="Martin S."/>
            <person name="Mashreghi-Mohammadi M."/>
            <person name="Maslen G.L."/>
            <person name="Matthews L."/>
            <person name="McCann O.T."/>
            <person name="McLaren S.J."/>
            <person name="McLay K."/>
            <person name="McMurray A."/>
            <person name="Moore M.J.F."/>
            <person name="Mullikin J.C."/>
            <person name="Niblett D."/>
            <person name="Nickerson T."/>
            <person name="Novik K.L."/>
            <person name="Oliver K."/>
            <person name="Overton-Larty E.K."/>
            <person name="Parker A."/>
            <person name="Patel R."/>
            <person name="Pearce A.V."/>
            <person name="Peck A.I."/>
            <person name="Phillimore B.J.C.T."/>
            <person name="Phillips S."/>
            <person name="Plumb R.W."/>
            <person name="Porter K.M."/>
            <person name="Ramsey Y."/>
            <person name="Ranby S.A."/>
            <person name="Rice C.M."/>
            <person name="Ross M.T."/>
            <person name="Searle S.M."/>
            <person name="Sehra H.K."/>
            <person name="Sheridan E."/>
            <person name="Skuce C.D."/>
            <person name="Smith S."/>
            <person name="Smith M."/>
            <person name="Spraggon L."/>
            <person name="Squares S.L."/>
            <person name="Steward C.A."/>
            <person name="Sycamore N."/>
            <person name="Tamlyn-Hall G."/>
            <person name="Tester J."/>
            <person name="Theaker A.J."/>
            <person name="Thomas D.W."/>
            <person name="Thorpe A."/>
            <person name="Tracey A."/>
            <person name="Tromans A."/>
            <person name="Tubby B."/>
            <person name="Wall M."/>
            <person name="Wallis J.M."/>
            <person name="West A.P."/>
            <person name="White S.S."/>
            <person name="Whitehead S.L."/>
            <person name="Whittaker H."/>
            <person name="Wild A."/>
            <person name="Willey D.J."/>
            <person name="Wilmer T.E."/>
            <person name="Wood J.M."/>
            <person name="Wray P.W."/>
            <person name="Wyatt J.C."/>
            <person name="Young L."/>
            <person name="Younger R.M."/>
            <person name="Bentley D.R."/>
            <person name="Coulson A."/>
            <person name="Durbin R.M."/>
            <person name="Hubbard T."/>
            <person name="Sulston J.E."/>
            <person name="Dunham I."/>
            <person name="Rogers J."/>
            <person name="Beck S."/>
        </authorList>
    </citation>
    <scope>NUCLEOTIDE SEQUENCE [LARGE SCALE GENOMIC DNA] (ALLELES DRA*01:01 AND DRA*01:02)</scope>
</reference>
<reference key="9">
    <citation type="submission" date="2005-07" db="EMBL/GenBank/DDBJ databases">
        <authorList>
            <person name="Mural R.J."/>
            <person name="Istrail S."/>
            <person name="Sutton G.G."/>
            <person name="Florea L."/>
            <person name="Halpern A.L."/>
            <person name="Mobarry C.M."/>
            <person name="Lippert R."/>
            <person name="Walenz B."/>
            <person name="Shatkay H."/>
            <person name="Dew I."/>
            <person name="Miller J.R."/>
            <person name="Flanigan M.J."/>
            <person name="Edwards N.J."/>
            <person name="Bolanos R."/>
            <person name="Fasulo D."/>
            <person name="Halldorsson B.V."/>
            <person name="Hannenhalli S."/>
            <person name="Turner R."/>
            <person name="Yooseph S."/>
            <person name="Lu F."/>
            <person name="Nusskern D.R."/>
            <person name="Shue B.C."/>
            <person name="Zheng X.H."/>
            <person name="Zhong F."/>
            <person name="Delcher A.L."/>
            <person name="Huson D.H."/>
            <person name="Kravitz S.A."/>
            <person name="Mouchard L."/>
            <person name="Reinert K."/>
            <person name="Remington K.A."/>
            <person name="Clark A.G."/>
            <person name="Waterman M.S."/>
            <person name="Eichler E.E."/>
            <person name="Adams M.D."/>
            <person name="Hunkapiller M.W."/>
            <person name="Myers E.W."/>
            <person name="Venter J.C."/>
        </authorList>
    </citation>
    <scope>NUCLEOTIDE SEQUENCE [LARGE SCALE GENOMIC DNA] (ALLELE DRA*01:01)</scope>
</reference>
<reference key="10">
    <citation type="journal article" date="1982" name="Cell">
        <title>Alpha chain of HLA-DR transplantation antigens is a member of the same protein superfamily as the immunoglobulins.</title>
        <authorList>
            <person name="Larhammar D."/>
            <person name="Gustafsson K."/>
            <person name="Claesson L."/>
            <person name="Bill P."/>
            <person name="Wiman K."/>
            <person name="Schenning L."/>
            <person name="Sundelin J."/>
            <person name="Widmark E."/>
            <person name="Peterson P.A."/>
            <person name="Rask L."/>
        </authorList>
    </citation>
    <scope>NUCLEOTIDE SEQUENCE [MRNA] OF 32-202 AND 204-254</scope>
    <scope>PROTEIN SEQUENCE OF 26-60</scope>
</reference>
<reference key="11">
    <citation type="journal article" date="1982" name="Proc. Natl. Acad. Sci. U.S.A.">
        <title>The amino acid sequence and gene organization of the heavy chain of the HLA-DR antigen: homology to immunoglobulins.</title>
        <authorList>
            <person name="Korman A.J."/>
            <person name="Auffray C."/>
            <person name="Schamboeck A."/>
            <person name="Strominger J.L."/>
        </authorList>
    </citation>
    <scope>NUCLEOTIDE SEQUENCE [GENOMIC DNA] OF 29-254 (ALLELE DRA*01:02)</scope>
</reference>
<reference key="12">
    <citation type="journal article" date="2002" name="Tissue Antigens">
        <title>The HLA-DRA*0102 allele: correct nucleotide sequence and associated HLA haplotypes.</title>
        <authorList>
            <person name="Kralovicova J."/>
            <person name="Marsh S.G."/>
            <person name="Waller M.J."/>
            <person name="Hammarstrom L."/>
            <person name="Vorechovsky I."/>
        </authorList>
    </citation>
    <scope>NUCLEOTIDE SEQUENCE [GENOMIC DNA] OF 205-254 (ALLELE DRA*01:02)</scope>
    <source>
        <tissue>Blood</tissue>
    </source>
</reference>
<reference key="13">
    <citation type="journal article" date="2004" name="Genome Res.">
        <title>The status, quality, and expansion of the NIH full-length cDNA project: the Mammalian Gene Collection (MGC).</title>
        <authorList>
            <consortium name="The MGC Project Team"/>
        </authorList>
    </citation>
    <scope>NUCLEOTIDE SEQUENCE [LARGE SCALE MRNA] (ALLELES DRA*01:01 AND DRA*01:02)</scope>
    <source>
        <tissue>Blood</tissue>
        <tissue>Colon</tissue>
    </source>
</reference>
<reference key="14">
    <citation type="journal article" date="1982" name="Hoppe-Seyler's Z. Physiol. Chem.">
        <title>Primary structure of class II human histocompatibility antigens. 2nd Communication. Amino acid sequence of the N-terminal 179 residues of the alpha-chain of an HLA-Dw2/DR2 alloantigen.</title>
        <authorList>
            <person name="Yang C.-Y."/>
            <person name="Kratzin H."/>
            <person name="Gotz H."/>
            <person name="Thinnes F.P."/>
            <person name="Kruse T."/>
            <person name="Egert G."/>
            <person name="Pauly E."/>
            <person name="Kolbel S."/>
            <person name="Wernet P."/>
            <person name="Hilschmann N."/>
        </authorList>
    </citation>
    <scope>PROTEIN SEQUENCE OF 26-204</scope>
</reference>
<reference key="15">
    <citation type="journal article" date="1983" name="Biochemistry">
        <title>N-terminal amino acid sequences of the alpha and beta chains of HLA-DR1 and HLA-DR2 antigens.</title>
        <authorList>
            <person name="Walker L.E."/>
            <person name="Hewick R."/>
            <person name="Hunkapiller M.W."/>
            <person name="Hood L.E."/>
            <person name="Dreyer W.J."/>
            <person name="Reisfeld R.A."/>
        </authorList>
    </citation>
    <scope>PROTEIN SEQUENCE OF 26-94</scope>
    <source>
        <tissue>B-cell</tissue>
    </source>
</reference>
<reference key="16">
    <citation type="journal article" date="1989" name="Science">
        <title>Class II MHC molecules are specific receptors for staphylococcus enterotoxin A.</title>
        <authorList>
            <person name="Mollick J.A."/>
            <person name="Cook R.G."/>
            <person name="Rich R.R."/>
        </authorList>
    </citation>
    <scope>FUNCTION</scope>
    <scope>INTERACTION WITH STAPHYLOCOCCUS ENTEROTOXIN A/ (MICROBIAL INFECTION)</scope>
</reference>
<reference key="17">
    <citation type="journal article" date="1990" name="Immunology">
        <title>Targeting of human cytotoxic T lymphocytes to MHC class II-expressing cells by staphylococcal enterotoxins.</title>
        <authorList>
            <person name="Dohlsten M."/>
            <person name="Lando P.A."/>
            <person name="Hedlund G."/>
            <person name="Trowsdale J."/>
            <person name="Kalland T."/>
        </authorList>
    </citation>
    <scope>INTERACTION WITH STAPHYLOCOCCUS AUREUS ENTEROTOXIN A/ENTA; B/ENTB; C1/ENTC1 AND D/ENTD (MICROBIAL INFECTION)</scope>
</reference>
<reference key="18">
    <citation type="journal article" date="1995" name="Proc. Natl. Acad. Sci. U.S.A.">
        <title>Invariant chain made in Escherichia coli has an exposed N-terminal segment that blocks antigen binding to HLA-DR1 and a trimeric C-terminal segment that binds empty HLA-DR1.</title>
        <authorList>
            <person name="Park S.J."/>
            <person name="Sadegh-Nasseri S."/>
            <person name="Wiley D.C."/>
        </authorList>
    </citation>
    <scope>INTERACTION WITH CD74 HOMOTRIMER</scope>
</reference>
<reference key="19">
    <citation type="journal article" date="1997" name="Immunity">
        <title>HLA-DM acts as a molecular chaperone and rescues empty HLA-DR molecules at lysosomal pH.</title>
        <authorList>
            <person name="Kropshofer H."/>
            <person name="Arndt S.O."/>
            <person name="Moldenhauer G."/>
            <person name="Haemmerling G.J."/>
            <person name="Vogt A.B."/>
        </authorList>
    </citation>
    <scope>FUNCTION</scope>
    <scope>SUBCELLULAR LOCATION</scope>
    <scope>INTERACTION WITH CLIP AND HLA-DM COMPLEX</scope>
</reference>
<reference key="20">
    <citation type="journal article" date="2000" name="Immunity">
        <title>Determination of the HLA-DM interaction site on HLA-DR molecules.</title>
        <authorList>
            <person name="Doebele R.C."/>
            <person name="Busch R."/>
            <person name="Scott H.M."/>
            <person name="Pashine A."/>
            <person name="Mellins E.D."/>
        </authorList>
    </citation>
    <scope>INTERACTION WITH HLA-DM COMPLEX AND CLIP</scope>
    <scope>MUTAGENESIS OF GLU-65 AND PHE-76</scope>
</reference>
<reference key="21">
    <citation type="journal article" date="2004" name="J. Immunol.">
        <title>Characterization of a Mycobacterium tuberculosis peptide that is recognized by human CD4+ and CD8+ T cells in the context of multiple HLA alleles.</title>
        <authorList>
            <person name="Shams H."/>
            <person name="Klucar P."/>
            <person name="Weis S.E."/>
            <person name="Lalvani A."/>
            <person name="Moonan P.K."/>
            <person name="Safi H."/>
            <person name="Wizel B."/>
            <person name="Ewer K."/>
            <person name="Nepom G.T."/>
            <person name="Lewinsohn D.M."/>
            <person name="Andersen P."/>
            <person name="Barnes P.F."/>
        </authorList>
    </citation>
    <scope>FUNCTION</scope>
</reference>
<reference key="22">
    <citation type="journal article" date="2004" name="Nat. Immunol.">
        <title>Upregulation of the CLIP self peptide on mature dendritic cells antagonizes T helper type 1 polarization.</title>
        <authorList>
            <person name="Roehn T.A."/>
            <person name="Boes M."/>
            <person name="Wolters D."/>
            <person name="Spindeldreher S."/>
            <person name="Mueller B."/>
            <person name="Langen H."/>
            <person name="Ploegh H."/>
            <person name="Vogt A.B."/>
            <person name="Kropshofer H."/>
        </authorList>
    </citation>
    <scope>FUNCTION</scope>
    <scope>SUBCELLULAR LOCATION</scope>
    <scope>TISSUE SPECIFICITY</scope>
    <scope>INDUCTION</scope>
</reference>
<reference key="23">
    <citation type="journal article" date="2007" name="Immunity">
        <title>Antigen-loading compartments for major histocompatibility complex class II molecules continuously receive input from autophagosomes.</title>
        <authorList>
            <person name="Schmid D."/>
            <person name="Pypaert M."/>
            <person name="Muenz C."/>
        </authorList>
    </citation>
    <scope>FUNCTION</scope>
    <scope>SUBCELLULAR LOCATION</scope>
</reference>
<reference key="24">
    <citation type="journal article" date="2008" name="Proc. Natl. Acad. Sci. U.S.A.">
        <title>MHC class II stabilization at the surface of human dendritic cells is the result of maturation-dependent MARCH I down-regulation.</title>
        <authorList>
            <person name="De Gassart A."/>
            <person name="Camosseto V."/>
            <person name="Thibodeau J."/>
            <person name="Ceppi M."/>
            <person name="Catalan N."/>
            <person name="Pierre P."/>
            <person name="Gatti E."/>
        </authorList>
    </citation>
    <scope>SUBCELLULAR LOCATION</scope>
</reference>
<reference key="25">
    <citation type="journal article" date="2009" name="J. Biol. Chem.">
        <title>The HLA-DRalpha chain is modified by polyubiquitination.</title>
        <authorList>
            <person name="Lapaque N."/>
            <person name="Jahnke M."/>
            <person name="Trowsdale J."/>
            <person name="Kelly A.P."/>
        </authorList>
    </citation>
    <scope>UBIQUITINATION AT LYS-244 BY MARCHF1 AND MARCHF8</scope>
    <scope>MUTAGENESIS OF LYS-244</scope>
    <scope>SUBCELLULAR LOCATION</scope>
</reference>
<reference key="26">
    <citation type="journal article" date="2009" name="J. Proteome Res.">
        <title>Glycoproteomics analysis of human liver tissue by combination of multiple enzyme digestion and hydrazide chemistry.</title>
        <authorList>
            <person name="Chen R."/>
            <person name="Jiang X."/>
            <person name="Sun D."/>
            <person name="Han G."/>
            <person name="Wang F."/>
            <person name="Ye M."/>
            <person name="Wang L."/>
            <person name="Zou H."/>
        </authorList>
    </citation>
    <scope>GLYCOSYLATION [LARGE SCALE ANALYSIS] AT ASN-103 AND ASN-143</scope>
    <source>
        <tissue>Liver</tissue>
    </source>
</reference>
<reference key="27">
    <citation type="journal article" date="2011" name="BMC Syst. Biol.">
        <title>Initial characterization of the human central proteome.</title>
        <authorList>
            <person name="Burkard T.R."/>
            <person name="Planyavsky M."/>
            <person name="Kaupe I."/>
            <person name="Breitwieser F.P."/>
            <person name="Buerckstuemmer T."/>
            <person name="Bennett K.L."/>
            <person name="Superti-Furga G."/>
            <person name="Colinge J."/>
        </authorList>
    </citation>
    <scope>IDENTIFICATION BY MASS SPECTROMETRY [LARGE SCALE ANALYSIS]</scope>
</reference>
<reference key="28">
    <citation type="journal article" date="2012" name="J. Immunol.">
        <title>Frequency of epitope-specific naive CD4(+) T cells correlates with immunodominance in the human memory repertoire.</title>
        <authorList>
            <person name="Kwok W.W."/>
            <person name="Tan V."/>
            <person name="Gillette L."/>
            <person name="Littell C.T."/>
            <person name="Soltis M.A."/>
            <person name="LaFond R.B."/>
            <person name="Yang J."/>
            <person name="James E.A."/>
            <person name="DeLong J.H."/>
        </authorList>
    </citation>
    <scope>FUNCTION</scope>
</reference>
<reference key="29">
    <citation type="journal article" date="2013" name="Nat. Commun.">
        <title>Exploring the MHC-peptide matrix of central tolerance in the human thymus.</title>
        <authorList>
            <person name="Adamopoulou E."/>
            <person name="Tenzer S."/>
            <person name="Hillen N."/>
            <person name="Klug P."/>
            <person name="Rota I.A."/>
            <person name="Tietz S."/>
            <person name="Gebhardt M."/>
            <person name="Stevanovic S."/>
            <person name="Schild H."/>
            <person name="Tolosa E."/>
            <person name="Melms A."/>
            <person name="Stoeckle C."/>
        </authorList>
    </citation>
    <scope>FUNCTION</scope>
    <scope>TISSUE SPECIFICITY</scope>
</reference>
<reference key="30">
    <citation type="journal article" date="2014" name="J. Proteomics">
        <title>An enzyme assisted RP-RPLC approach for in-depth analysis of human liver phosphoproteome.</title>
        <authorList>
            <person name="Bian Y."/>
            <person name="Song C."/>
            <person name="Cheng K."/>
            <person name="Dong M."/>
            <person name="Wang F."/>
            <person name="Huang J."/>
            <person name="Sun D."/>
            <person name="Wang L."/>
            <person name="Ye M."/>
            <person name="Zou H."/>
        </authorList>
    </citation>
    <scope>IDENTIFICATION BY MASS SPECTROMETRY [LARGE SCALE ANALYSIS]</scope>
    <source>
        <tissue>Liver</tissue>
    </source>
</reference>
<reference key="31">
    <citation type="journal article" date="2014" name="Nat. Commun.">
        <title>Divergent paths for the selection of immunodominant epitopes from distinct antigenic sources.</title>
        <authorList>
            <person name="Kim A."/>
            <person name="Hartman I.Z."/>
            <person name="Poore B."/>
            <person name="Boronina T."/>
            <person name="Cole R.N."/>
            <person name="Song N."/>
            <person name="Ciudad M.T."/>
            <person name="Caspi R.R."/>
            <person name="Jaraquemada D."/>
            <person name="Sadegh-Nasseri S."/>
        </authorList>
    </citation>
    <scope>FUNCTION</scope>
    <scope>INTERACTION WITH HLA-DM AND PEPTIDE</scope>
</reference>
<reference key="32">
    <citation type="journal article" date="2016" name="J. Immunol.">
        <title>Circulating Memory CD4+ T Cells Target Conserved Epitopes of Rhinovirus Capsid Proteins and Respond Rapidly to Experimental Infection in Humans.</title>
        <authorList>
            <person name="Muehling L.M."/>
            <person name="Mai D.T."/>
            <person name="Kwok W.W."/>
            <person name="Heymann P.W."/>
            <person name="Pomes A."/>
            <person name="Woodfolk J.A."/>
        </authorList>
    </citation>
    <scope>FUNCTION</scope>
</reference>
<reference key="33">
    <citation type="journal article" date="2016" name="Proc. Natl. Acad. Sci. U.S.A.">
        <title>Remarkably low affinity of CD4/peptide-major histocompatibility complex class II protein interactions.</title>
        <authorList>
            <person name="Joensson P."/>
            <person name="Southcombe J.H."/>
            <person name="Santos A.M."/>
            <person name="Huo J."/>
            <person name="Fernandes R.A."/>
            <person name="McColl J."/>
            <person name="Lever M."/>
            <person name="Evans E.J."/>
            <person name="Hudson A."/>
            <person name="Chang V.T."/>
            <person name="Hanke T."/>
            <person name="Godkin A."/>
            <person name="Dunne P.D."/>
            <person name="Horrocks M.H."/>
            <person name="Palayret M."/>
            <person name="Screaton G.R."/>
            <person name="Petersen J."/>
            <person name="Rossjohn J."/>
            <person name="Fugger L."/>
            <person name="Dushek O."/>
            <person name="Xu X.N."/>
            <person name="Davis S.J."/>
            <person name="Klenerman D."/>
        </authorList>
    </citation>
    <scope>INTERACTION WITH CD4</scope>
    <scope>DOMAIN</scope>
    <scope>MUTAGENESIS OF THR-115 AND LEU-117</scope>
</reference>
<reference key="34">
    <citation type="journal article" date="2019" name="Immunity">
        <title>Defining HLA-II Ligand Processing and Binding Rules with Mass Spectrometry Enhances Cancer Epitope Prediction.</title>
        <authorList>
            <person name="Abelin J.G."/>
            <person name="Harjanto D."/>
            <person name="Malloy M."/>
            <person name="Suri P."/>
            <person name="Colson T."/>
            <person name="Goulding S.P."/>
            <person name="Creech A.L."/>
            <person name="Serrano L.R."/>
            <person name="Nasir G."/>
            <person name="Nasrullah Y."/>
            <person name="McGann C.D."/>
            <person name="Velez D."/>
            <person name="Ting Y.S."/>
            <person name="Poran A."/>
            <person name="Rothenberg D.A."/>
            <person name="Chhangawala S."/>
            <person name="Rubinsteyn A."/>
            <person name="Hammerbacher J."/>
            <person name="Gaynor R.B."/>
            <person name="Fritsch E.F."/>
            <person name="Greshock J."/>
            <person name="Oslund R.C."/>
            <person name="Barthelme D."/>
            <person name="Addona T.A."/>
            <person name="Arieta C.M."/>
            <person name="Rooney M.S."/>
        </authorList>
    </citation>
    <scope>FUNCTION</scope>
    <scope>TISSUE SPECIFICITY</scope>
</reference>
<reference key="35">
    <citation type="journal article" date="1993" name="Nature">
        <title>Three-dimensional structure of the human class II histocompatibility antigen HLA-DR1.</title>
        <authorList>
            <person name="Brown J.H."/>
            <person name="Jardetzky T.S."/>
            <person name="Gorga J.C."/>
            <person name="Stern L.J."/>
            <person name="Urban R.G."/>
            <person name="Strominger J.L."/>
            <person name="Wiley D.C."/>
        </authorList>
    </citation>
    <scope>X-RAY CRYSTALLOGRAPHY (2.8 ANGSTROMS) OF 28-207</scope>
</reference>
<reference evidence="46" key="36">
    <citation type="journal article" date="1994" name="Nature">
        <title>Crystal structure of the human class II MHC protein HLA-DR1 complexed with an influenza virus peptide.</title>
        <authorList>
            <person name="Stern L.J."/>
            <person name="Brown J.H."/>
            <person name="Jardetzky T.J."/>
            <person name="Gorga J.C."/>
            <person name="Urban R.G."/>
            <person name="Strominger J.L."/>
            <person name="Wiley D.C."/>
        </authorList>
    </citation>
    <scope>X-RAY CRYSTALLOGRAPHY (2.8 ANGSTROMS) OF 28-207 IN COMPLEX WITH HLA-DRB1*01:01 AND IAV PEPTIDE</scope>
    <scope>FUNCTION</scope>
    <scope>DOMAIN</scope>
</reference>
<reference evidence="50" key="37">
    <citation type="journal article" date="1994" name="Nature">
        <title>Three-dimensional structure of a human class II histocompatibility molecule complexed with superantigen.</title>
        <authorList>
            <person name="Jardetzky T.S."/>
            <person name="Brown J.H."/>
            <person name="Gorga J.C."/>
            <person name="Stern L.J."/>
            <person name="Urban R.G."/>
            <person name="Chi Y.I."/>
            <person name="Stauffacher C."/>
            <person name="Strominger J.L."/>
            <person name="Wiley D.C."/>
        </authorList>
    </citation>
    <scope>X-RAY CRYSTALLOGRAPHY (2.7 ANGSTROMS) OF 26-206 IN COMPLEX WITH STAPHYLOCOCCUS ENTEROTOXIN B/ENTB (MICROBIAL INFECTION)</scope>
</reference>
<reference key="38">
    <citation type="journal article" date="1995" name="Nature">
        <title>The structure of an intermediate in class II MHC maturation: CLIP bound to HLA-DR3.</title>
        <authorList>
            <person name="Ghosh P."/>
            <person name="Amaya M."/>
            <person name="Mellins E."/>
            <person name="Wiley D.C."/>
        </authorList>
    </citation>
    <scope>X-RAY CRYSTALLOGRAPHY (2.75 ANGSTROMS) OF 30-205 IN COMPLEX WITH HLA-DRB1*03:01 AND CD74 PEPTIDE (CLIP)</scope>
    <scope>SUBUNIT</scope>
    <scope>GLYCOSYLATION AT ASN-103 AND ASN-143</scope>
    <scope>DISULFIDE BOND</scope>
</reference>
<reference evidence="51" key="39">
    <citation type="journal article" date="1997" name="Immunity">
        <title>X-ray crystal structure of HLA-DR4 (DRA*0101, DRB1*0401) complexed with a peptide from human collagen II.</title>
        <authorList>
            <person name="Dessen A."/>
            <person name="Lawrence C.M."/>
            <person name="Cupo S."/>
            <person name="Zaller D.M."/>
            <person name="Wiley D.C."/>
        </authorList>
    </citation>
    <scope>X-RAY CRYSTALLOGRAPHY (2.5 ANGSTROMS) OF 26-206 IN COMPLEX WITH HLA-DRB1*04:01 AND COL2A1 PEPTIDE</scope>
    <scope>SUBUNIT</scope>
    <scope>DOMAIN</scope>
</reference>
<reference evidence="45" key="40">
    <citation type="journal article" date="1998" name="J. Exp. Med.">
        <title>Crystal structure of HLA-DR2 (DRA*0101, DRB1*1501) complexed with a peptide from human myelin basic protein.</title>
        <authorList>
            <person name="Smith K.J."/>
            <person name="Pyrdol J."/>
            <person name="Gauthier L."/>
            <person name="Wiley D.C."/>
            <person name="Wucherpfennig K.W."/>
        </authorList>
    </citation>
    <scope>X-RAY CRYSTALLOGRAPHY (2.6 ANGSTROMS) OF 27-206 IN COMPLEX WITH HLA-DRB1*15:01 AND MBP PEPTIDE</scope>
    <scope>SUBUNIT</scope>
    <scope>DOMAIN</scope>
</reference>
<reference evidence="47" key="41">
    <citation type="journal article" date="2000" name="J. Mol. Biol.">
        <title>Structural basis for the binding of an immunodominant peptide from myelin basic protein in different registers by two HLA-DR2 proteins.</title>
        <authorList>
            <person name="Li Y."/>
            <person name="Li H."/>
            <person name="Martin R."/>
            <person name="Mariuzza R.A."/>
        </authorList>
    </citation>
    <scope>X-RAY CRYSTALLOGRAPHY (1.9 ANGSTROMS) OF 26-206 IN COMPLEX WITH HLA-DRB5*01:01 AND MBP PEPTIDE</scope>
    <scope>SUBUNIT</scope>
</reference>
<reference evidence="49" key="42">
    <citation type="journal article" date="2001" name="EMBO J.">
        <title>Crystal structure of a superantigen bound to MHC class II displays zinc and peptide dependence.</title>
        <authorList>
            <person name="Petersson K."/>
            <person name="Haakansson M."/>
            <person name="Nilsson H."/>
            <person name="Forsberg G."/>
            <person name="Svensson L.A."/>
            <person name="Liljas A."/>
            <person name="Walse B."/>
        </authorList>
    </citation>
    <scope>X-RAY CRYSTALLOGRAPHY (2.60 ANGSTROMS) OF 26-207</scope>
    <scope>INTERACTION WITH STAPHYLOCOCCUS ENTEROTOXIN H/ENTH (MICROBIAL INFECTION)</scope>
</reference>
<reference evidence="48" key="43">
    <citation type="journal article" date="2001" name="Immunity">
        <title>Crystal structure of a superantigen bound to the high-affinity, zinc-dependent site on MHC class II.</title>
        <authorList>
            <person name="Li Y."/>
            <person name="Li H."/>
            <person name="Dimasi N."/>
            <person name="McCormick J.K."/>
            <person name="Martin R."/>
            <person name="Schuck P."/>
            <person name="Schlievert P.M."/>
            <person name="Mariuzza R.A."/>
        </authorList>
    </citation>
    <scope>X-RAY CRYSTALLOGRAPHY (3.2 ANGSTROMS) OF 26-206 IN COMPLEX WITH HLA-DRB5*01:01; MBP PEPTIDE AND STREPTOCOCCUS PYOGENES SPEC PEPTIDE</scope>
    <scope>SUBUNIT</scope>
    <scope>DISULFIDE BOND</scope>
</reference>
<reference key="44">
    <citation type="journal article" date="2002" name="Mol. Cell">
        <title>Structure of the Epstein-Barr virus gp42 protein bound to the MHC class II receptor HLA-DR1.</title>
        <authorList>
            <person name="Mullen M.M."/>
            <person name="Haan K.M."/>
            <person name="Longnecker R."/>
            <person name="Jardetzky T.S."/>
        </authorList>
    </citation>
    <scope>X-RAY CRYSTALLOGRAPHY (2.65 ANGSTROMS) OF 28-207 IN COMPLEX WITH HLA-DRB1*01:01 EPSTEIN-BARR VIRUS BZLF2/GP42 (MICROBIAL INFECTION)</scope>
</reference>
<reference key="45">
    <citation type="journal article" date="2002" name="Nat. Immunol.">
        <title>A functional and structural basis for TCR cross-reactivity in multiple sclerosis.</title>
        <authorList>
            <person name="Lang H.L.E."/>
            <person name="Jacobsen H."/>
            <person name="Ikemizu S."/>
            <person name="Andersson C."/>
            <person name="Harlos K."/>
            <person name="Madsen L."/>
            <person name="Hjorth P."/>
            <person name="Sondergaard L."/>
            <person name="Svejgaard A."/>
            <person name="Wucherpfennig K."/>
            <person name="Stuart D.I."/>
            <person name="Bell J.I."/>
            <person name="Jones E.Y."/>
            <person name="Fugger L."/>
        </authorList>
    </citation>
    <scope>X-RAY CRYSTALLOGRAPHY (3.1 ANGSTROMS) OF 26-207 IN COMPLEX WITH HLA-DRB5*01:01 AND EPSTEIN-BARR VIRUS BALF5 PEPTIDE</scope>
    <scope>SUBUNIT</scope>
    <scope>DISULFIDE BOND</scope>
</reference>
<reference key="46">
    <citation type="journal article" date="2005" name="EMBO J.">
        <title>Structure of a human autoimmune TCR bound to a myelin basic protein self-peptide and a multiple sclerosis-associated MHC class II molecule.</title>
        <authorList>
            <person name="Li Y."/>
            <person name="Huang Y."/>
            <person name="Lue J."/>
            <person name="Quandt J.A."/>
            <person name="Martin R."/>
            <person name="Mariuzza R.A."/>
        </authorList>
    </citation>
    <scope>X-RAY CRYSTALLOGRAPHY (2.8 ANGSTROMS) OF 26-206 IN COMPLEX WITH HLA-DRB5*01:01; MBP PEPTIDE AND TRAC</scope>
    <scope>SUBUNIT</scope>
    <scope>DISULFIDE BOND</scope>
</reference>
<reference key="47">
    <citation type="journal article" date="2007" name="J. Mol. Biol.">
        <title>Crystallographic structure of the human leukocyte antigen DRA, DRB3*0101: models of a directional alloimmune response and autoimmunity.</title>
        <authorList>
            <person name="Parry C.S."/>
            <person name="Gorski J."/>
            <person name="Stern L.J."/>
        </authorList>
    </citation>
    <scope>X-RAY CRYSTALLOGRAPHY (2.25 ANGSTROMS) OF 26-207 IN COMPLEX WITH HLA-DRB3*01:01 AND ITGB3 PEPTIDE (ALLOANTIGEN HPA-1A)</scope>
    <scope>SUBUNIT</scope>
    <scope>DOMAIN</scope>
    <scope>DISULFIDE BOND</scope>
</reference>
<reference key="48">
    <citation type="journal article" date="2007" name="Nat. Immunol.">
        <title>Structural basis for the recognition of mutant self by a tumor-specific, MHC class II-restricted T cell receptor.</title>
        <authorList>
            <person name="Deng L."/>
            <person name="Langley R.J."/>
            <person name="Brown P.H."/>
            <person name="Xu G."/>
            <person name="Teng L."/>
            <person name="Wang Q."/>
            <person name="Gonzales M.I."/>
            <person name="Callender G.G."/>
            <person name="Nishimura M.I."/>
            <person name="Topalian S.L."/>
            <person name="Mariuzza R.A."/>
        </authorList>
    </citation>
    <scope>X-RAY CRYSTALLOGRAPHY (2.60 ANGSTROMS) OF 26-207 IN COMPLEX WITH HLA-DRB1*01:01 AND NEOANTIGEN</scope>
    <scope>INTERACTION WITH TCR</scope>
    <scope>FUNCTION</scope>
</reference>
<reference key="49">
    <citation type="journal article" date="2008" name="Proc. Natl. Acad. Sci. U.S.A.">
        <title>The structure of HLA-DR52c: comparison to other HLA-DRB3 alleles.</title>
        <authorList>
            <person name="Dai S."/>
            <person name="Crawford F."/>
            <person name="Marrack P."/>
            <person name="Kappler J.W."/>
        </authorList>
    </citation>
    <scope>X-RAY CRYSTALLOGRAPHY (1.8 ANGSTROMS) OF 26-206 IN COMPLEX WITH HLA-DRB3*03:01 AND EEF1A2 PEPTIDE</scope>
    <scope>SUBUNIT</scope>
</reference>
<reference key="50">
    <citation type="journal article" date="2010" name="Nat. Commun.">
        <title>The structure of superantigen complexed with TCR and MHC reveals novel insights into superantigenic T cell activation.</title>
        <authorList>
            <person name="Saline M."/>
            <person name="Roedstroem K.E."/>
            <person name="Fischer G."/>
            <person name="Orekhov V.Y."/>
            <person name="Karlsson B.G."/>
            <person name="Lindkvist-Petersson K."/>
        </authorList>
    </citation>
    <scope>X-RAY CRYSTALLOGRAPHY (2.30 ANGSTROMS) OF 26-207</scope>
    <scope>INTERACTION WITH STAPHYLOCOCCUS ENTEROTOXIN H/ENTH (MICROBIAL INFECTION)</scope>
</reference>
<reference key="51">
    <citation type="journal article" date="2010" name="Proc. Natl. Acad. Sci. U.S.A.">
        <title>Bidirectional binding of invariant chain peptides to an MHC class II molecule.</title>
        <authorList>
            <person name="Gunther S."/>
            <person name="Schlundt A."/>
            <person name="Sticht J."/>
            <person name="Roske Y."/>
            <person name="Heinemann U."/>
            <person name="Wiesmuller K.H."/>
            <person name="Jung G."/>
            <person name="Falk K."/>
            <person name="Rotzschke O."/>
            <person name="Freund C."/>
        </authorList>
    </citation>
    <scope>X-RAY CRYSTALLOGRAPHY (1.95 ANGSTROMS) OF 26-217 IN COMPLEX WITH HLA-DRB1*01:01 AND CLIP PEPTIDE</scope>
    <scope>SUBUNIT</scope>
</reference>
<reference key="52">
    <citation type="journal article" date="2012" name="Cell">
        <title>Crystal structure of the HLA-DM-HLA-DR1 complex defines mechanisms for rapid peptide selection.</title>
        <authorList>
            <person name="Pos W."/>
            <person name="Sethi D.K."/>
            <person name="Call M.J."/>
            <person name="Schulze M.S."/>
            <person name="Anders A.K."/>
            <person name="Pyrdol J."/>
            <person name="Wucherpfennig K.W."/>
        </authorList>
    </citation>
    <scope>X-RAY CRYSTALLOGRAPHY (2.60 ANGSTROMS) OF 26-216 IN COMPLEX WITH HLA-DRB1*15:01; HLA-DM HETERODIMER AND IAV HA PEPTIDE</scope>
    <scope>MUTAGENESIS OF GLU-65; TRP-68; GLY-74; PHE-76; SER-78; PHE-79; GLU-80; GLN-82; PRO-121 AND ARG-125</scope>
</reference>
<reference key="53">
    <citation type="journal article" date="2013" name="J. Exp. Med.">
        <title>A molecular basis for the association of the HLA-DRB1 locus, citrullination, and rheumatoid arthritis.</title>
        <authorList>
            <person name="Scally S.W."/>
            <person name="Petersen J."/>
            <person name="Law S.C."/>
            <person name="Dudek N.L."/>
            <person name="Nel H.J."/>
            <person name="Loh K.L."/>
            <person name="Wijeyewickrema L.C."/>
            <person name="Eckle S.B."/>
            <person name="van Heemst J."/>
            <person name="Pike R.N."/>
            <person name="McCluskey J."/>
            <person name="Toes R.E."/>
            <person name="La Gruta N.L."/>
            <person name="Purcell A.W."/>
            <person name="Reid H.H."/>
            <person name="Thomas R."/>
            <person name="Rossjohn J."/>
        </authorList>
    </citation>
    <scope>X-RAY CRYSTALLOGRAPHY (1.65 ANGSTROMS) OF 26-206 IN COMPLEX WITH HLA-DRB1 AND PEPTIDE</scope>
    <scope>FUNCTION</scope>
</reference>
<reference evidence="54 55" key="54">
    <citation type="journal article" date="2018" name="J. Biol. Chem.">
        <title>The interplay between citrullination and HLA-DRB1 polymorphism in shaping peptide binding hierarchies in rheumatoid arthritis.</title>
        <authorList>
            <person name="Ting Y.T."/>
            <person name="Petersen J."/>
            <person name="Ramarathinam S.H."/>
            <person name="Scally S.W."/>
            <person name="Loh K.L."/>
            <person name="Thomas R."/>
            <person name="Suri A."/>
            <person name="Baker D.G."/>
            <person name="Purcell A.W."/>
            <person name="Reid H.H."/>
            <person name="Rossjohn J."/>
        </authorList>
    </citation>
    <scope>X-RAY CRYSTALLOGRAPHY (2.20 ANGSTROMS) OF 26-206 IN COMPLEX WITH HLA-DRB1 AND CITRULLINATED CAMP</scope>
</reference>
<reference key="55">
    <citation type="journal article" date="2018" name="Sci. Immunol.">
        <title>CD4+ T cell-mediated HLA class II cross-restriction in HIV controllers.</title>
        <authorList>
            <person name="Galperin M."/>
            <person name="Farenc C."/>
            <person name="Mukhopadhyay M."/>
            <person name="Jayasinghe D."/>
            <person name="Decroos A."/>
            <person name="Benati D."/>
            <person name="Tan L.L."/>
            <person name="Ciacchi L."/>
            <person name="Reid H.H."/>
            <person name="Rossjohn J."/>
            <person name="Chakrabarti L.A."/>
            <person name="Gras S."/>
        </authorList>
    </citation>
    <scope>X-RAY CRYSTALLOGRAPHY (2.00 ANGSTROMS) OF 26-206 IN COMPLEX WITH HLA-DRB AND HIV-1 GAG-POL PEPTIDE</scope>
    <scope>FUNCTION</scope>
    <scope>INTERACTION WITH TCR</scope>
    <scope>SUBCELLULAR LOCATION</scope>
    <scope>MUTAGENESIS OF GLU-80 AND ALA-93</scope>
    <scope>DOMAIN</scope>
</reference>
<reference key="56">
    <citation type="journal article" date="2019" name="J. Biol. Chem.">
        <title>Human leukocyte antigen (HLA) class II peptide flanking residues tune the immunogenicity of a human tumor-derived epitope.</title>
        <authorList>
            <person name="MacLachlan B.J."/>
            <person name="Dolton G."/>
            <person name="Papakyriakou A."/>
            <person name="Greenshields-Watson A."/>
            <person name="Mason G.H."/>
            <person name="Schauenburg A."/>
            <person name="Besneux M."/>
            <person name="Szomolay B."/>
            <person name="Elliott T."/>
            <person name="Sewell A.K."/>
            <person name="Gallimore A."/>
            <person name="Rizkallah P."/>
            <person name="Cole D.K."/>
            <person name="Godkin A."/>
        </authorList>
    </citation>
    <scope>X-RAY CRYSTALLOGRAPHY (1.95 ANGSTROMS) OF 27-206 IN COMPLEX WITH HLA-DRB1*01:01 AND TPBG 5T4 PEPTIDE</scope>
    <scope>SUBUNIT</scope>
    <scope>DISULFIDE BOND</scope>
</reference>
<reference key="57">
    <citation type="journal article" date="2020" name="Cell Rep.">
        <title>CD4+ T Cells Recognize Conserved Influenza A Epitopes through Shared Patterns of V-Gene Usage and Complementary Biochemical Features.</title>
        <authorList>
            <person name="Greenshields-Watson A."/>
            <person name="Attaf M."/>
            <person name="MacLachlan B.J."/>
            <person name="Whalley T."/>
            <person name="Rius C."/>
            <person name="Wall A."/>
            <person name="Lloyd A."/>
            <person name="Hughes H."/>
            <person name="Strange K.E."/>
            <person name="Mason G.H."/>
            <person name="Schauenburg A.J."/>
            <person name="Hulin-Curtis S.L."/>
            <person name="Geary J."/>
            <person name="Chen Y."/>
            <person name="Lauder S.N."/>
            <person name="Smart K."/>
            <person name="Vijaykrishna D."/>
            <person name="Grau M.L."/>
            <person name="Shugay M."/>
            <person name="Andrews R."/>
            <person name="Dolton G."/>
            <person name="Rizkallah P.J."/>
            <person name="Gallimore A.M."/>
            <person name="Sewell A.K."/>
            <person name="Godkin A.J."/>
            <person name="Cole D.K."/>
        </authorList>
    </citation>
    <scope>X-RAY CRYSTALLOGRAPHY (1.64 ANGSTROMS) OF 28-207 IN COMPLEX WITH HLA-DRB1*01:01 AND IAV PEPTIDE</scope>
    <scope>SUBUNIT</scope>
</reference>